<accession>Q9H2K2</accession>
<accession>B2RBD3</accession>
<accession>Q9H8F2</accession>
<accession>Q9HAS4</accession>
<name>TNKS2_HUMAN</name>
<keyword id="KW-0002">3D-structure</keyword>
<keyword id="KW-0013">ADP-ribosylation</keyword>
<keyword id="KW-0040">ANK repeat</keyword>
<keyword id="KW-0158">Chromosome</keyword>
<keyword id="KW-0963">Cytoplasm</keyword>
<keyword id="KW-0328">Glycosyltransferase</keyword>
<keyword id="KW-0333">Golgi apparatus</keyword>
<keyword id="KW-0379">Hydroxylation</keyword>
<keyword id="KW-0472">Membrane</keyword>
<keyword id="KW-0479">Metal-binding</keyword>
<keyword id="KW-0520">NAD</keyword>
<keyword id="KW-0548">Nucleotidyltransferase</keyword>
<keyword id="KW-0539">Nucleus</keyword>
<keyword id="KW-1267">Proteomics identification</keyword>
<keyword id="KW-1185">Reference proteome</keyword>
<keyword id="KW-0677">Repeat</keyword>
<keyword id="KW-0779">Telomere</keyword>
<keyword id="KW-0808">Transferase</keyword>
<keyword id="KW-0832">Ubl conjugation</keyword>
<keyword id="KW-0879">Wnt signaling pathway</keyword>
<keyword id="KW-0862">Zinc</keyword>
<organism>
    <name type="scientific">Homo sapiens</name>
    <name type="common">Human</name>
    <dbReference type="NCBI Taxonomy" id="9606"/>
    <lineage>
        <taxon>Eukaryota</taxon>
        <taxon>Metazoa</taxon>
        <taxon>Chordata</taxon>
        <taxon>Craniata</taxon>
        <taxon>Vertebrata</taxon>
        <taxon>Euteleostomi</taxon>
        <taxon>Mammalia</taxon>
        <taxon>Eutheria</taxon>
        <taxon>Euarchontoglires</taxon>
        <taxon>Primates</taxon>
        <taxon>Haplorrhini</taxon>
        <taxon>Catarrhini</taxon>
        <taxon>Hominidae</taxon>
        <taxon>Homo</taxon>
    </lineage>
</organism>
<protein>
    <recommendedName>
        <fullName evidence="17">Poly [ADP-ribose] polymerase tankyrase-2</fullName>
        <ecNumber evidence="9 11">2.4.2.30</ecNumber>
    </recommendedName>
    <alternativeName>
        <fullName evidence="16">ADP-ribosyltransferase diphtheria toxin-like 6</fullName>
        <shortName evidence="16">ARTD6</shortName>
    </alternativeName>
    <alternativeName>
        <fullName evidence="16">Poly [ADP-ribose] polymerase 5B</fullName>
    </alternativeName>
    <alternativeName>
        <fullName evidence="17">Protein poly-ADP-ribosyltransferase tankyrase-2</fullName>
        <ecNumber evidence="9 14">2.4.2.-</ecNumber>
    </alternativeName>
    <alternativeName>
        <fullName>TNKS-2</fullName>
    </alternativeName>
    <alternativeName>
        <fullName>TRF1-interacting ankyrin-related ADP-ribose polymerase 2</fullName>
    </alternativeName>
    <alternativeName>
        <fullName>Tankyrase II</fullName>
    </alternativeName>
    <alternativeName>
        <fullName>Tankyrase-2</fullName>
        <shortName>TANK2</shortName>
    </alternativeName>
    <alternativeName>
        <fullName>Tankyrase-like protein</fullName>
    </alternativeName>
    <alternativeName>
        <fullName>Tankyrase-related protein</fullName>
    </alternativeName>
</protein>
<feature type="chain" id="PRO_0000211334" description="Poly [ADP-ribose] polymerase tankyrase-2">
    <location>
        <begin position="1"/>
        <end position="1166"/>
    </location>
</feature>
<feature type="repeat" description="ANK 1">
    <location>
        <begin position="57"/>
        <end position="89"/>
    </location>
</feature>
<feature type="repeat" description="ANK 2">
    <location>
        <begin position="90"/>
        <end position="122"/>
    </location>
</feature>
<feature type="repeat" description="ANK 3">
    <location>
        <begin position="123"/>
        <end position="155"/>
    </location>
</feature>
<feature type="repeat" description="ANK 4">
    <location>
        <begin position="210"/>
        <end position="242"/>
    </location>
</feature>
<feature type="repeat" description="ANK 5">
    <location>
        <begin position="243"/>
        <end position="275"/>
    </location>
</feature>
<feature type="repeat" description="ANK 6">
    <location>
        <begin position="276"/>
        <end position="308"/>
    </location>
</feature>
<feature type="repeat" description="ANK 7">
    <location>
        <begin position="363"/>
        <end position="398"/>
    </location>
</feature>
<feature type="repeat" description="ANK 8">
    <location>
        <begin position="399"/>
        <end position="431"/>
    </location>
</feature>
<feature type="repeat" description="ANK 9">
    <location>
        <begin position="432"/>
        <end position="464"/>
    </location>
</feature>
<feature type="repeat" description="ANK 10">
    <location>
        <begin position="525"/>
        <end position="557"/>
    </location>
</feature>
<feature type="repeat" description="ANK 11">
    <location>
        <begin position="558"/>
        <end position="590"/>
    </location>
</feature>
<feature type="repeat" description="ANK 12">
    <location>
        <begin position="591"/>
        <end position="623"/>
    </location>
</feature>
<feature type="repeat" description="ANK 13">
    <location>
        <begin position="678"/>
        <end position="710"/>
    </location>
</feature>
<feature type="repeat" description="ANK 14">
    <location>
        <begin position="711"/>
        <end position="743"/>
    </location>
</feature>
<feature type="repeat" description="ANK 15">
    <location>
        <begin position="744"/>
        <end position="776"/>
    </location>
</feature>
<feature type="domain" description="SAM" evidence="2">
    <location>
        <begin position="873"/>
        <end position="936"/>
    </location>
</feature>
<feature type="domain" description="PARP catalytic" evidence="3">
    <location>
        <begin position="959"/>
        <end position="1164"/>
    </location>
</feature>
<feature type="region of interest" description="HIF1AN-binding" evidence="10">
    <location>
        <begin position="545"/>
        <end position="553"/>
    </location>
</feature>
<feature type="region of interest" description="Disordered" evidence="4">
    <location>
        <begin position="819"/>
        <end position="839"/>
    </location>
</feature>
<feature type="compositionally biased region" description="Low complexity" evidence="4">
    <location>
        <begin position="822"/>
        <end position="839"/>
    </location>
</feature>
<feature type="binding site" evidence="1">
    <location>
        <position position="1081"/>
    </location>
    <ligand>
        <name>Zn(2+)</name>
        <dbReference type="ChEBI" id="CHEBI:29105"/>
    </ligand>
</feature>
<feature type="binding site" evidence="1">
    <location>
        <position position="1084"/>
    </location>
    <ligand>
        <name>Zn(2+)</name>
        <dbReference type="ChEBI" id="CHEBI:29105"/>
    </ligand>
</feature>
<feature type="binding site" evidence="1">
    <location>
        <position position="1089"/>
    </location>
    <ligand>
        <name>Zn(2+)</name>
        <dbReference type="ChEBI" id="CHEBI:29105"/>
    </ligand>
</feature>
<feature type="binding site" evidence="1">
    <location>
        <position position="1092"/>
    </location>
    <ligand>
        <name>Zn(2+)</name>
        <dbReference type="ChEBI" id="CHEBI:29105"/>
    </ligand>
</feature>
<feature type="modified residue" description="(3S)-3-hydroxyasparagine; by HIF1AN; partial" evidence="8">
    <location>
        <position position="203"/>
    </location>
</feature>
<feature type="modified residue" description="(3S)-3-hydroxyhistidine; by HIF1AN; partial" evidence="10">
    <location>
        <position position="238"/>
    </location>
</feature>
<feature type="modified residue" description="(3S)-3-hydroxyasparagine; by HIF1AN; partial" evidence="8">
    <location>
        <position position="271"/>
    </location>
</feature>
<feature type="modified residue" description="(3S)-3-hydroxyasparagine; by HIF1AN; partial" evidence="8">
    <location>
        <position position="427"/>
    </location>
</feature>
<feature type="modified residue" description="(3S)-3-hydroxyasparagine; by HIF1AN; partial" evidence="8">
    <location>
        <position position="518"/>
    </location>
</feature>
<feature type="modified residue" description="(3S)-3-hydroxyhistidine; by HIF1AN; partial" evidence="10">
    <location>
        <position position="553"/>
    </location>
</feature>
<feature type="modified residue" description="(3S)-3-hydroxyasparagine; by HIF1AN; partial" evidence="8">
    <location>
        <position position="586"/>
    </location>
</feature>
<feature type="modified residue" description="(3S)-3-hydroxyasparagine; by HIF1AN; partial" evidence="8">
    <location>
        <position position="671"/>
    </location>
</feature>
<feature type="modified residue" description="(3S)-3-hydroxyasparagine; by HIF1AN; partial" evidence="8">
    <location>
        <position position="706"/>
    </location>
</feature>
<feature type="modified residue" description="(3S)-3-hydroxyasparagine; by HIF1AN; partial" evidence="8">
    <location>
        <position position="739"/>
    </location>
</feature>
<feature type="mutagenesis site" description="Enhanced hydroxylation by HIF1AN." evidence="10">
    <original>H</original>
    <variation>D</variation>
    <location>
        <position position="553"/>
    </location>
</feature>
<feature type="mutagenesis site" description="Enhanced hydroxylation by HIF1AN." evidence="10">
    <original>H</original>
    <variation>N</variation>
    <location>
        <position position="553"/>
    </location>
</feature>
<feature type="mutagenesis site" description="Loss of activity." evidence="9">
    <original>M</original>
    <variation>V</variation>
    <location>
        <position position="1054"/>
    </location>
</feature>
<feature type="sequence conflict" description="In Ref. 7; BAG37180." evidence="17" ref="7">
    <original>A</original>
    <variation>T</variation>
    <location>
        <position position="115"/>
    </location>
</feature>
<feature type="sequence conflict" description="In Ref. 1; AAG25674." evidence="17" ref="1">
    <original>KGHSLLQ</original>
    <variation>QRPLVAA</variation>
    <location>
        <begin position="331"/>
        <end position="337"/>
    </location>
</feature>
<feature type="sequence conflict" description="In Ref. 1; AAG25674." evidence="17" ref="1">
    <original>NFKHP</original>
    <variation>IQAS</variation>
    <location>
        <begin position="357"/>
        <end position="361"/>
    </location>
</feature>
<feature type="sequence conflict" description="In Ref. 7; BAB14665." evidence="17" ref="7">
    <original>Q</original>
    <variation>P</variation>
    <location>
        <position position="966"/>
    </location>
</feature>
<feature type="helix" evidence="21">
    <location>
        <begin position="488"/>
        <end position="502"/>
    </location>
</feature>
<feature type="helix" evidence="21">
    <location>
        <begin position="505"/>
        <end position="511"/>
    </location>
</feature>
<feature type="turn" evidence="21">
    <location>
        <begin position="514"/>
        <end position="518"/>
    </location>
</feature>
<feature type="turn" evidence="21">
    <location>
        <begin position="522"/>
        <end position="525"/>
    </location>
</feature>
<feature type="helix" evidence="21">
    <location>
        <begin position="529"/>
        <end position="535"/>
    </location>
</feature>
<feature type="helix" evidence="21">
    <location>
        <begin position="539"/>
        <end position="547"/>
    </location>
</feature>
<feature type="helix" evidence="21">
    <location>
        <begin position="562"/>
        <end position="568"/>
    </location>
</feature>
<feature type="helix" evidence="21">
    <location>
        <begin position="572"/>
        <end position="580"/>
    </location>
</feature>
<feature type="helix" evidence="21">
    <location>
        <begin position="595"/>
        <end position="602"/>
    </location>
</feature>
<feature type="helix" evidence="21">
    <location>
        <begin position="605"/>
        <end position="613"/>
    </location>
</feature>
<feature type="helix" evidence="21">
    <location>
        <begin position="628"/>
        <end position="631"/>
    </location>
</feature>
<feature type="helix" evidence="21">
    <location>
        <begin position="637"/>
        <end position="644"/>
    </location>
</feature>
<feature type="helix" evidence="24">
    <location>
        <begin position="693"/>
        <end position="699"/>
    </location>
</feature>
<feature type="helix" evidence="23">
    <location>
        <begin position="876"/>
        <end position="884"/>
    </location>
</feature>
<feature type="helix" evidence="23">
    <location>
        <begin position="888"/>
        <end position="890"/>
    </location>
</feature>
<feature type="helix" evidence="23">
    <location>
        <begin position="891"/>
        <end position="896"/>
    </location>
</feature>
<feature type="helix" evidence="23">
    <location>
        <begin position="901"/>
        <end position="904"/>
    </location>
</feature>
<feature type="helix" evidence="23">
    <location>
        <begin position="909"/>
        <end position="914"/>
    </location>
</feature>
<feature type="helix" evidence="23">
    <location>
        <begin position="920"/>
        <end position="936"/>
    </location>
</feature>
<feature type="strand" evidence="22">
    <location>
        <begin position="954"/>
        <end position="957"/>
    </location>
</feature>
<feature type="helix" evidence="19">
    <location>
        <begin position="964"/>
        <end position="974"/>
    </location>
</feature>
<feature type="turn" evidence="19">
    <location>
        <begin position="980"/>
        <end position="986"/>
    </location>
</feature>
<feature type="strand" evidence="19">
    <location>
        <begin position="990"/>
        <end position="999"/>
    </location>
</feature>
<feature type="helix" evidence="19">
    <location>
        <begin position="1003"/>
        <end position="1018"/>
    </location>
</feature>
<feature type="turn" evidence="19">
    <location>
        <begin position="1019"/>
        <end position="1021"/>
    </location>
</feature>
<feature type="strand" evidence="19">
    <location>
        <begin position="1026"/>
        <end position="1031"/>
    </location>
</feature>
<feature type="helix" evidence="19">
    <location>
        <begin position="1036"/>
        <end position="1042"/>
    </location>
</feature>
<feature type="helix" evidence="19">
    <location>
        <begin position="1046"/>
        <end position="1048"/>
    </location>
</feature>
<feature type="turn" evidence="20">
    <location>
        <begin position="1053"/>
        <end position="1055"/>
    </location>
</feature>
<feature type="strand" evidence="19">
    <location>
        <begin position="1059"/>
        <end position="1064"/>
    </location>
</feature>
<feature type="helix" evidence="19">
    <location>
        <begin position="1065"/>
        <end position="1069"/>
    </location>
</feature>
<feature type="turn" evidence="19">
    <location>
        <begin position="1070"/>
        <end position="1073"/>
    </location>
</feature>
<feature type="helix" evidence="19">
    <location>
        <begin position="1075"/>
        <end position="1077"/>
    </location>
</feature>
<feature type="turn" evidence="19">
    <location>
        <begin position="1082"/>
        <end position="1084"/>
    </location>
</feature>
<feature type="strand" evidence="19">
    <location>
        <begin position="1090"/>
        <end position="1092"/>
    </location>
</feature>
<feature type="strand" evidence="19">
    <location>
        <begin position="1094"/>
        <end position="1102"/>
    </location>
</feature>
<feature type="strand" evidence="19">
    <location>
        <begin position="1105"/>
        <end position="1109"/>
    </location>
</feature>
<feature type="strand" evidence="19">
    <location>
        <begin position="1115"/>
        <end position="1117"/>
    </location>
</feature>
<feature type="strand" evidence="19">
    <location>
        <begin position="1123"/>
        <end position="1127"/>
    </location>
</feature>
<feature type="strand" evidence="19">
    <location>
        <begin position="1131"/>
        <end position="1133"/>
    </location>
</feature>
<feature type="strand" evidence="19">
    <location>
        <begin position="1138"/>
        <end position="1143"/>
    </location>
</feature>
<feature type="helix" evidence="19">
    <location>
        <begin position="1144"/>
        <end position="1146"/>
    </location>
</feature>
<feature type="strand" evidence="19">
    <location>
        <begin position="1147"/>
        <end position="1157"/>
    </location>
</feature>
<comment type="function">
    <text evidence="5 6 9 11 13 14">Poly-ADP-ribosyltransferase involved in various processes such as Wnt signaling pathway, telomere length and vesicle trafficking (PubMed:11739745, PubMed:11802774, PubMed:19759537, PubMed:21478859, PubMed:23622245, PubMed:25043379). Acts as an activator of the Wnt signaling pathway by mediating poly-ADP-ribosylation of AXIN1 and AXIN2, 2 key components of the beta-catenin destruction complex: poly-ADP-ribosylated target proteins are recognized by RNF146, which mediates their ubiquitination and subsequent degradation (PubMed:19759537, PubMed:21478859). Also mediates poly-ADP-ribosylation of BLZF1 and CASC3, followed by recruitment of RNF146 and subsequent ubiquitination (PubMed:21478859). Mediates poly-ADP-ribosylation of TERF1, thereby contributing to the regulation of telomere length (PubMed:11739745). Stimulates 26S proteasome activity (PubMed:23622245).</text>
</comment>
<comment type="catalytic activity">
    <reaction evidence="9 11">
        <text>NAD(+) + (ADP-D-ribosyl)n-acceptor = nicotinamide + (ADP-D-ribosyl)n+1-acceptor + H(+).</text>
        <dbReference type="EC" id="2.4.2.30"/>
    </reaction>
</comment>
<comment type="catalytic activity">
    <reaction evidence="17">
        <text>L-aspartyl-[protein] + NAD(+) = 4-O-(ADP-D-ribosyl)-L-aspartyl-[protein] + nicotinamide</text>
        <dbReference type="Rhea" id="RHEA:54424"/>
        <dbReference type="Rhea" id="RHEA-COMP:9867"/>
        <dbReference type="Rhea" id="RHEA-COMP:13832"/>
        <dbReference type="ChEBI" id="CHEBI:17154"/>
        <dbReference type="ChEBI" id="CHEBI:29961"/>
        <dbReference type="ChEBI" id="CHEBI:57540"/>
        <dbReference type="ChEBI" id="CHEBI:138102"/>
    </reaction>
    <physiologicalReaction direction="left-to-right" evidence="17">
        <dbReference type="Rhea" id="RHEA:54425"/>
    </physiologicalReaction>
</comment>
<comment type="catalytic activity">
    <reaction evidence="17">
        <text>L-glutamyl-[protein] + NAD(+) = 5-O-(ADP-D-ribosyl)-L-glutamyl-[protein] + nicotinamide</text>
        <dbReference type="Rhea" id="RHEA:58224"/>
        <dbReference type="Rhea" id="RHEA-COMP:10208"/>
        <dbReference type="Rhea" id="RHEA-COMP:15089"/>
        <dbReference type="ChEBI" id="CHEBI:17154"/>
        <dbReference type="ChEBI" id="CHEBI:29973"/>
        <dbReference type="ChEBI" id="CHEBI:57540"/>
        <dbReference type="ChEBI" id="CHEBI:142540"/>
    </reaction>
    <physiologicalReaction direction="left-to-right" evidence="17">
        <dbReference type="Rhea" id="RHEA:58225"/>
    </physiologicalReaction>
</comment>
<comment type="activity regulation">
    <text evidence="9 15">Specifically inhibited by XAV939, a small molecule, leading to inhibit the Wnt signaling pathway by stabilizing AXIN1 and AXIN2 (PubMed:19759537). Inhibited by talazoparib (PubMed:33361107).</text>
</comment>
<comment type="subunit">
    <text evidence="6 7 8 9 10 11 12">Oligomerizes and associates with TNKS. Interacts with the cytoplasmic domain of LNPEP/Otase in SLC2A4/GLUT4-vesicles (PubMed:11802774). Binds to the N-terminus of Grb14 and TRF1 with its ankyrin repeat region (PubMed:11802774). Interacts with HIF1AN (PubMed:18936059, PubMed:21251231). Interacts with RNF146; this interaction leads to ubiquitination and proteasomal degradation (PubMed:21799911). Interacts with NUMA1 (PubMed:12080061).</text>
</comment>
<comment type="interaction">
    <interactant intactId="EBI-4398527">
        <id>Q9H2K2</id>
    </interactant>
    <interactant intactId="EBI-359567">
        <id>O15084</id>
        <label>ANKRD28</label>
    </interactant>
    <organismsDiffer>false</organismsDiffer>
    <experiments>3</experiments>
</comment>
<comment type="interaction">
    <interactant intactId="EBI-4398527">
        <id>Q9H2K2</id>
    </interactant>
    <interactant intactId="EBI-16079078">
        <id>Q7Z6K5-1</id>
        <label>ARPIN</label>
    </interactant>
    <organismsDiffer>false</organismsDiffer>
    <experiments>5</experiments>
</comment>
<comment type="interaction">
    <interactant intactId="EBI-4398527">
        <id>Q9H2K2</id>
    </interactant>
    <interactant intactId="EBI-710484">
        <id>O15169</id>
        <label>AXIN1</label>
    </interactant>
    <organismsDiffer>false</organismsDiffer>
    <experiments>2</experiments>
</comment>
<comment type="interaction">
    <interactant intactId="EBI-4398527">
        <id>Q9H2K2</id>
    </interactant>
    <interactant intactId="EBI-745725">
        <id>Q9NWV8</id>
        <label>BABAM1</label>
    </interactant>
    <organismsDiffer>false</organismsDiffer>
    <experiments>7</experiments>
</comment>
<comment type="interaction">
    <interactant intactId="EBI-4398527">
        <id>Q9H2K2</id>
    </interactant>
    <interactant intactId="EBI-712838">
        <id>P11274</id>
        <label>BCR</label>
    </interactant>
    <organismsDiffer>false</organismsDiffer>
    <experiments>3</experiments>
</comment>
<comment type="interaction">
    <interactant intactId="EBI-4398527">
        <id>Q9H2K2</id>
    </interactant>
    <interactant intactId="EBI-5329490">
        <id>Q13698</id>
        <label>CACNA1S</label>
    </interactant>
    <organismsDiffer>false</organismsDiffer>
    <experiments>2</experiments>
</comment>
<comment type="interaction">
    <interactant intactId="EBI-4398527">
        <id>Q9H2K2</id>
    </interactant>
    <interactant intactId="EBI-529989">
        <id>Q9NRI5</id>
        <label>DISC1</label>
    </interactant>
    <organismsDiffer>false</organismsDiffer>
    <experiments>3</experiments>
</comment>
<comment type="interaction">
    <interactant intactId="EBI-4398527">
        <id>Q9H2K2</id>
    </interactant>
    <interactant intactId="EBI-948985">
        <id>Q6V0I7</id>
        <label>FAT4</label>
    </interactant>
    <organismsDiffer>false</organismsDiffer>
    <experiments>2</experiments>
</comment>
<comment type="interaction">
    <interactant intactId="EBI-4398527">
        <id>Q9H2K2</id>
    </interactant>
    <interactant intactId="EBI-745632">
        <id>Q9NWT6</id>
        <label>HIF1AN</label>
    </interactant>
    <organismsDiffer>false</organismsDiffer>
    <experiments>8</experiments>
</comment>
<comment type="interaction">
    <interactant intactId="EBI-4398527">
        <id>Q9H2K2</id>
    </interactant>
    <interactant intactId="EBI-5329558">
        <id>P14652</id>
        <label>HOXB2</label>
    </interactant>
    <organismsDiffer>false</organismsDiffer>
    <experiments>3</experiments>
</comment>
<comment type="interaction">
    <interactant intactId="EBI-4398527">
        <id>Q9H2K2</id>
    </interactant>
    <interactant intactId="EBI-2805360">
        <id>Q9UIQ6</id>
        <label>LNPEP</label>
    </interactant>
    <organismsDiffer>false</organismsDiffer>
    <experiments>3</experiments>
</comment>
<comment type="interaction">
    <interactant intactId="EBI-4398527">
        <id>Q9H2K2</id>
    </interactant>
    <interactant intactId="EBI-521611">
        <id>Q14980</id>
        <label>NUMA1</label>
    </interactant>
    <organismsDiffer>false</organismsDiffer>
    <experiments>4</experiments>
</comment>
<comment type="interaction">
    <interactant intactId="EBI-4398527">
        <id>Q9H2K2</id>
    </interactant>
    <interactant intactId="EBI-721802">
        <id>Q9BZL4</id>
        <label>PPP1R12C</label>
    </interactant>
    <organismsDiffer>false</organismsDiffer>
    <experiments>2</experiments>
</comment>
<comment type="interaction">
    <interactant intactId="EBI-4398527">
        <id>Q9H2K2</id>
    </interactant>
    <interactant intactId="EBI-5333483">
        <id>Q92698</id>
        <label>RAD54L</label>
    </interactant>
    <organismsDiffer>false</organismsDiffer>
    <experiments>3</experiments>
</comment>
<comment type="interaction">
    <interactant intactId="EBI-4398527">
        <id>Q9H2K2</id>
    </interactant>
    <interactant intactId="EBI-727062">
        <id>P78314</id>
        <label>SH3BP2</label>
    </interactant>
    <organismsDiffer>false</organismsDiffer>
    <experiments>5</experiments>
</comment>
<comment type="interaction">
    <interactant intactId="EBI-4398527">
        <id>Q9H2K2</id>
    </interactant>
    <interactant intactId="EBI-1046642">
        <id>O43815</id>
        <label>STRN</label>
    </interactant>
    <organismsDiffer>false</organismsDiffer>
    <experiments>2</experiments>
</comment>
<comment type="interaction">
    <interactant intactId="EBI-4398527">
        <id>Q9H2K2</id>
    </interactant>
    <interactant intactId="EBI-710997">
        <id>P54274</id>
        <label>TERF1</label>
    </interactant>
    <organismsDiffer>false</organismsDiffer>
    <experiments>5</experiments>
</comment>
<comment type="interaction">
    <interactant intactId="EBI-4398527">
        <id>Q9H2K2</id>
    </interactant>
    <interactant intactId="EBI-2104458">
        <id>Q9C0C2</id>
        <label>TNKS1BP1</label>
    </interactant>
    <organismsDiffer>false</organismsDiffer>
    <experiments>3</experiments>
</comment>
<comment type="interaction">
    <interactant intactId="EBI-4398527">
        <id>Q9H2K2</id>
    </interactant>
    <interactant intactId="EBI-2513462">
        <id>Q9UHP3</id>
        <label>USP25</label>
    </interactant>
    <organismsDiffer>false</organismsDiffer>
    <experiments>2</experiments>
</comment>
<comment type="interaction">
    <interactant intactId="EBI-4398527">
        <id>Q9H2K2</id>
    </interactant>
    <interactant intactId="EBI-5323518">
        <id>Q06649</id>
        <label>Sh3bp2</label>
    </interactant>
    <organismsDiffer>true</organismsDiffer>
    <experiments>6</experiments>
</comment>
<comment type="subcellular location">
    <subcellularLocation>
        <location>Cytoplasm</location>
    </subcellularLocation>
    <subcellularLocation>
        <location>Golgi apparatus membrane</location>
        <topology>Peripheral membrane protein</topology>
    </subcellularLocation>
    <subcellularLocation>
        <location>Nucleus</location>
    </subcellularLocation>
    <subcellularLocation>
        <location evidence="17">Chromosome</location>
        <location evidence="17">Telomere</location>
    </subcellularLocation>
    <text>Associated with the Golgi and with juxtanuclear SLC2A4/GLUT4-vesicles. Also found around the pericentriolar matrix of mitotic centromeres. During interphase, a small fraction of TNKS2 is found in the nucleus, associated with TRF1.</text>
</comment>
<comment type="tissue specificity">
    <text>Highly expressed in placenta, skeletal muscle, liver, brain, kidney, heart, thymus, spinal cord, lung, peripheral blood leukocytes, pancreas, lymph nodes, spleen, prostate, testis, ovary, small intestine, colon, mammary gland, breast and breast carcinoma, and in common-type meningioma. Highly expressed in fetal liver, heart and brain.</text>
</comment>
<comment type="PTM">
    <text evidence="1 11 12">Ubiquitinated at 'Lys-48' and 'Lys-63' by RNF146 when auto-poly-ADP-ribosylated; this leads to degradation. Deubiquitinated by USP25; leading to stabilization (By similarity).</text>
</comment>
<comment type="PTM">
    <text evidence="11">ADP-ribosylated (-auto). Poly-ADP-ribosylated protein is recognized by RNF146, followed by ubiquitination.</text>
</comment>
<comment type="PTM">
    <text evidence="10">The crystallographic evidence suggests that the 3-hydroxyhistidine may be the (3S) stereoisomer.</text>
</comment>
<comment type="similarity">
    <text evidence="17">Belongs to the ARTD/PARP family.</text>
</comment>
<comment type="sequence caution" evidence="17">
    <conflict type="erroneous initiation">
        <sequence resource="EMBL-CDS" id="AAG25674"/>
    </conflict>
    <text>Extended N-terminus.</text>
</comment>
<comment type="sequence caution" evidence="17">
    <conflict type="erroneous initiation">
        <sequence resource="EMBL-CDS" id="BAB14665"/>
    </conflict>
    <text>Truncated N-terminus.</text>
</comment>
<reference key="1">
    <citation type="journal article" date="2001" name="Clin. Cancer Res.">
        <title>Novel tankyrase-related gene detected with meningioma-specific sera.</title>
        <authorList>
            <person name="Monz D."/>
            <person name="Munnia A."/>
            <person name="Comtesse N."/>
            <person name="Fischer U."/>
            <person name="Steudel W.-I."/>
            <person name="Feiden W."/>
            <person name="Glass B."/>
            <person name="Meese E.U."/>
        </authorList>
    </citation>
    <scope>NUCLEOTIDE SEQUENCE [MRNA]</scope>
    <source>
        <tissue>Fetal brain</tissue>
    </source>
</reference>
<reference key="2">
    <citation type="journal article" date="2001" name="Genes Immun.">
        <title>Cloning and characterization of TNKL, a member of tankyrase gene family.</title>
        <authorList>
            <person name="Kuimov A.N."/>
            <person name="Kuprash D.V."/>
            <person name="Petrov V.N."/>
            <person name="Vdovichenko K.K."/>
            <person name="Scanlan M.J."/>
            <person name="Jongeneel C.V."/>
            <person name="Lagarkova M.A."/>
            <person name="Nedospasov S.A."/>
        </authorList>
    </citation>
    <scope>NUCLEOTIDE SEQUENCE [MRNA]</scope>
    <source>
        <tissue>Mammary carcinoma</tissue>
    </source>
</reference>
<reference key="3">
    <citation type="journal article" date="2001" name="J. Biol. Chem.">
        <title>Identification of a novel human tankyrase through its interaction with the adaptor protein Grb14.</title>
        <authorList>
            <person name="Lyons R.J."/>
            <person name="Deane R."/>
            <person name="Lynch D.K."/>
            <person name="Ye Z.-S.J."/>
            <person name="Sanderson G.M."/>
            <person name="Eyre H.J."/>
            <person name="Sutherland G.R."/>
            <person name="Daly R.J."/>
        </authorList>
    </citation>
    <scope>NUCLEOTIDE SEQUENCE [MRNA]</scope>
    <scope>SUBCELLULAR LOCATION</scope>
    <source>
        <tissue>Liver</tissue>
    </source>
</reference>
<reference key="4">
    <citation type="journal article" date="2001" name="J. Biol. Chem.">
        <title>TANK2, a new TRF1-associated poly(ADP-ribose) polymerase, causes rapid induction of cell death upon overexpression.</title>
        <authorList>
            <person name="Kaminker P.G."/>
            <person name="Kim S.-H."/>
            <person name="Taylor R.D."/>
            <person name="Zebarjadian Y."/>
            <person name="Funk W.D."/>
            <person name="Morin G.B."/>
            <person name="Yaswen P."/>
            <person name="Campisi J."/>
        </authorList>
    </citation>
    <scope>NUCLEOTIDE SEQUENCE [MRNA]</scope>
    <scope>SUBCELLULAR LOCATION</scope>
    <source>
        <tissue>Placenta</tissue>
    </source>
</reference>
<reference key="5">
    <citation type="journal article" date="2002" name="Biochem. J.">
        <title>Tankyrase-2 oligomerizes with tankyrase-1 and binds to both TRF1 (telomere-repeat-binding factor 1) and IRAP (insulin-responsive aminopeptidase).</title>
        <authorList>
            <person name="Sbodio J.I."/>
            <person name="Lodish H.F."/>
            <person name="Chi N.-W."/>
        </authorList>
    </citation>
    <scope>NUCLEOTIDE SEQUENCE [MRNA]</scope>
    <scope>FUNCTION</scope>
    <scope>INTERACTION WITH TRF1 AND LNPEP/OTASE</scope>
    <source>
        <tissue>Skeletal muscle</tissue>
    </source>
</reference>
<reference key="6">
    <citation type="submission" date="2001-10" db="EMBL/GenBank/DDBJ databases">
        <authorList>
            <person name="Yin Y."/>
            <person name="Gelmann E.P."/>
        </authorList>
    </citation>
    <scope>NUCLEOTIDE SEQUENCE [MRNA]</scope>
</reference>
<reference key="7">
    <citation type="journal article" date="2004" name="Nat. Genet.">
        <title>Complete sequencing and characterization of 21,243 full-length human cDNAs.</title>
        <authorList>
            <person name="Ota T."/>
            <person name="Suzuki Y."/>
            <person name="Nishikawa T."/>
            <person name="Otsuki T."/>
            <person name="Sugiyama T."/>
            <person name="Irie R."/>
            <person name="Wakamatsu A."/>
            <person name="Hayashi K."/>
            <person name="Sato H."/>
            <person name="Nagai K."/>
            <person name="Kimura K."/>
            <person name="Makita H."/>
            <person name="Sekine M."/>
            <person name="Obayashi M."/>
            <person name="Nishi T."/>
            <person name="Shibahara T."/>
            <person name="Tanaka T."/>
            <person name="Ishii S."/>
            <person name="Yamamoto J."/>
            <person name="Saito K."/>
            <person name="Kawai Y."/>
            <person name="Isono Y."/>
            <person name="Nakamura Y."/>
            <person name="Nagahari K."/>
            <person name="Murakami K."/>
            <person name="Yasuda T."/>
            <person name="Iwayanagi T."/>
            <person name="Wagatsuma M."/>
            <person name="Shiratori A."/>
            <person name="Sudo H."/>
            <person name="Hosoiri T."/>
            <person name="Kaku Y."/>
            <person name="Kodaira H."/>
            <person name="Kondo H."/>
            <person name="Sugawara M."/>
            <person name="Takahashi M."/>
            <person name="Kanda K."/>
            <person name="Yokoi T."/>
            <person name="Furuya T."/>
            <person name="Kikkawa E."/>
            <person name="Omura Y."/>
            <person name="Abe K."/>
            <person name="Kamihara K."/>
            <person name="Katsuta N."/>
            <person name="Sato K."/>
            <person name="Tanikawa M."/>
            <person name="Yamazaki M."/>
            <person name="Ninomiya K."/>
            <person name="Ishibashi T."/>
            <person name="Yamashita H."/>
            <person name="Murakawa K."/>
            <person name="Fujimori K."/>
            <person name="Tanai H."/>
            <person name="Kimata M."/>
            <person name="Watanabe M."/>
            <person name="Hiraoka S."/>
            <person name="Chiba Y."/>
            <person name="Ishida S."/>
            <person name="Ono Y."/>
            <person name="Takiguchi S."/>
            <person name="Watanabe S."/>
            <person name="Yosida M."/>
            <person name="Hotuta T."/>
            <person name="Kusano J."/>
            <person name="Kanehori K."/>
            <person name="Takahashi-Fujii A."/>
            <person name="Hara H."/>
            <person name="Tanase T.-O."/>
            <person name="Nomura Y."/>
            <person name="Togiya S."/>
            <person name="Komai F."/>
            <person name="Hara R."/>
            <person name="Takeuchi K."/>
            <person name="Arita M."/>
            <person name="Imose N."/>
            <person name="Musashino K."/>
            <person name="Yuuki H."/>
            <person name="Oshima A."/>
            <person name="Sasaki N."/>
            <person name="Aotsuka S."/>
            <person name="Yoshikawa Y."/>
            <person name="Matsunawa H."/>
            <person name="Ichihara T."/>
            <person name="Shiohata N."/>
            <person name="Sano S."/>
            <person name="Moriya S."/>
            <person name="Momiyama H."/>
            <person name="Satoh N."/>
            <person name="Takami S."/>
            <person name="Terashima Y."/>
            <person name="Suzuki O."/>
            <person name="Nakagawa S."/>
            <person name="Senoh A."/>
            <person name="Mizoguchi H."/>
            <person name="Goto Y."/>
            <person name="Shimizu F."/>
            <person name="Wakebe H."/>
            <person name="Hishigaki H."/>
            <person name="Watanabe T."/>
            <person name="Sugiyama A."/>
            <person name="Takemoto M."/>
            <person name="Kawakami B."/>
            <person name="Yamazaki M."/>
            <person name="Watanabe K."/>
            <person name="Kumagai A."/>
            <person name="Itakura S."/>
            <person name="Fukuzumi Y."/>
            <person name="Fujimori Y."/>
            <person name="Komiyama M."/>
            <person name="Tashiro H."/>
            <person name="Tanigami A."/>
            <person name="Fujiwara T."/>
            <person name="Ono T."/>
            <person name="Yamada K."/>
            <person name="Fujii Y."/>
            <person name="Ozaki K."/>
            <person name="Hirao M."/>
            <person name="Ohmori Y."/>
            <person name="Kawabata A."/>
            <person name="Hikiji T."/>
            <person name="Kobatake N."/>
            <person name="Inagaki H."/>
            <person name="Ikema Y."/>
            <person name="Okamoto S."/>
            <person name="Okitani R."/>
            <person name="Kawakami T."/>
            <person name="Noguchi S."/>
            <person name="Itoh T."/>
            <person name="Shigeta K."/>
            <person name="Senba T."/>
            <person name="Matsumura K."/>
            <person name="Nakajima Y."/>
            <person name="Mizuno T."/>
            <person name="Morinaga M."/>
            <person name="Sasaki M."/>
            <person name="Togashi T."/>
            <person name="Oyama M."/>
            <person name="Hata H."/>
            <person name="Watanabe M."/>
            <person name="Komatsu T."/>
            <person name="Mizushima-Sugano J."/>
            <person name="Satoh T."/>
            <person name="Shirai Y."/>
            <person name="Takahashi Y."/>
            <person name="Nakagawa K."/>
            <person name="Okumura K."/>
            <person name="Nagase T."/>
            <person name="Nomura N."/>
            <person name="Kikuchi H."/>
            <person name="Masuho Y."/>
            <person name="Yamashita R."/>
            <person name="Nakai K."/>
            <person name="Yada T."/>
            <person name="Nakamura Y."/>
            <person name="Ohara O."/>
            <person name="Isogai T."/>
            <person name="Sugano S."/>
        </authorList>
    </citation>
    <scope>NUCLEOTIDE SEQUENCE [LARGE SCALE MRNA]</scope>
    <source>
        <tissue>Placenta</tissue>
        <tissue>Testis</tissue>
    </source>
</reference>
<reference key="8">
    <citation type="journal article" date="2004" name="Nature">
        <title>The DNA sequence and comparative analysis of human chromosome 10.</title>
        <authorList>
            <person name="Deloukas P."/>
            <person name="Earthrowl M.E."/>
            <person name="Grafham D.V."/>
            <person name="Rubenfield M."/>
            <person name="French L."/>
            <person name="Steward C.A."/>
            <person name="Sims S.K."/>
            <person name="Jones M.C."/>
            <person name="Searle S."/>
            <person name="Scott C."/>
            <person name="Howe K."/>
            <person name="Hunt S.E."/>
            <person name="Andrews T.D."/>
            <person name="Gilbert J.G.R."/>
            <person name="Swarbreck D."/>
            <person name="Ashurst J.L."/>
            <person name="Taylor A."/>
            <person name="Battles J."/>
            <person name="Bird C.P."/>
            <person name="Ainscough R."/>
            <person name="Almeida J.P."/>
            <person name="Ashwell R.I.S."/>
            <person name="Ambrose K.D."/>
            <person name="Babbage A.K."/>
            <person name="Bagguley C.L."/>
            <person name="Bailey J."/>
            <person name="Banerjee R."/>
            <person name="Bates K."/>
            <person name="Beasley H."/>
            <person name="Bray-Allen S."/>
            <person name="Brown A.J."/>
            <person name="Brown J.Y."/>
            <person name="Burford D.C."/>
            <person name="Burrill W."/>
            <person name="Burton J."/>
            <person name="Cahill P."/>
            <person name="Camire D."/>
            <person name="Carter N.P."/>
            <person name="Chapman J.C."/>
            <person name="Clark S.Y."/>
            <person name="Clarke G."/>
            <person name="Clee C.M."/>
            <person name="Clegg S."/>
            <person name="Corby N."/>
            <person name="Coulson A."/>
            <person name="Dhami P."/>
            <person name="Dutta I."/>
            <person name="Dunn M."/>
            <person name="Faulkner L."/>
            <person name="Frankish A."/>
            <person name="Frankland J.A."/>
            <person name="Garner P."/>
            <person name="Garnett J."/>
            <person name="Gribble S."/>
            <person name="Griffiths C."/>
            <person name="Grocock R."/>
            <person name="Gustafson E."/>
            <person name="Hammond S."/>
            <person name="Harley J.L."/>
            <person name="Hart E."/>
            <person name="Heath P.D."/>
            <person name="Ho T.P."/>
            <person name="Hopkins B."/>
            <person name="Horne J."/>
            <person name="Howden P.J."/>
            <person name="Huckle E."/>
            <person name="Hynds C."/>
            <person name="Johnson C."/>
            <person name="Johnson D."/>
            <person name="Kana A."/>
            <person name="Kay M."/>
            <person name="Kimberley A.M."/>
            <person name="Kershaw J.K."/>
            <person name="Kokkinaki M."/>
            <person name="Laird G.K."/>
            <person name="Lawlor S."/>
            <person name="Lee H.M."/>
            <person name="Leongamornlert D.A."/>
            <person name="Laird G."/>
            <person name="Lloyd C."/>
            <person name="Lloyd D.M."/>
            <person name="Loveland J."/>
            <person name="Lovell J."/>
            <person name="McLaren S."/>
            <person name="McLay K.E."/>
            <person name="McMurray A."/>
            <person name="Mashreghi-Mohammadi M."/>
            <person name="Matthews L."/>
            <person name="Milne S."/>
            <person name="Nickerson T."/>
            <person name="Nguyen M."/>
            <person name="Overton-Larty E."/>
            <person name="Palmer S.A."/>
            <person name="Pearce A.V."/>
            <person name="Peck A.I."/>
            <person name="Pelan S."/>
            <person name="Phillimore B."/>
            <person name="Porter K."/>
            <person name="Rice C.M."/>
            <person name="Rogosin A."/>
            <person name="Ross M.T."/>
            <person name="Sarafidou T."/>
            <person name="Sehra H.K."/>
            <person name="Shownkeen R."/>
            <person name="Skuce C.D."/>
            <person name="Smith M."/>
            <person name="Standring L."/>
            <person name="Sycamore N."/>
            <person name="Tester J."/>
            <person name="Thorpe A."/>
            <person name="Torcasso W."/>
            <person name="Tracey A."/>
            <person name="Tromans A."/>
            <person name="Tsolas J."/>
            <person name="Wall M."/>
            <person name="Walsh J."/>
            <person name="Wang H."/>
            <person name="Weinstock K."/>
            <person name="West A.P."/>
            <person name="Willey D.L."/>
            <person name="Whitehead S.L."/>
            <person name="Wilming L."/>
            <person name="Wray P.W."/>
            <person name="Young L."/>
            <person name="Chen Y."/>
            <person name="Lovering R.C."/>
            <person name="Moschonas N.K."/>
            <person name="Siebert R."/>
            <person name="Fechtel K."/>
            <person name="Bentley D."/>
            <person name="Durbin R.M."/>
            <person name="Hubbard T."/>
            <person name="Doucette-Stamm L."/>
            <person name="Beck S."/>
            <person name="Smith D.R."/>
            <person name="Rogers J."/>
        </authorList>
    </citation>
    <scope>NUCLEOTIDE SEQUENCE [LARGE SCALE GENOMIC DNA]</scope>
</reference>
<reference key="9">
    <citation type="journal article" date="2002" name="J. Biol. Chem.">
        <title>Identification of a tankyrase-binding motif shared by IRAP, TAB182, and human TRF1 but not mouse TRF1. NuMA contains this RXXPDG motif and is a novel tankyrase partner.</title>
        <authorList>
            <person name="Sbodio J.I."/>
            <person name="Chi N.W."/>
        </authorList>
    </citation>
    <scope>INTERACTION WITH NUMA1</scope>
</reference>
<reference key="10">
    <citation type="journal article" date="2002" name="Mol. Cell. Biol.">
        <title>Role for the related poly(ADP-Ribose) polymerases tankyrase 1 and 2 at human telomeres.</title>
        <authorList>
            <person name="Cook B.D."/>
            <person name="Dynek J.N."/>
            <person name="Chang W."/>
            <person name="Shostak G."/>
            <person name="Smith S."/>
        </authorList>
    </citation>
    <scope>FUNCTION</scope>
    <scope>ADP-RIBOSYLATION</scope>
</reference>
<reference key="11">
    <citation type="journal article" date="2009" name="Mol. Cell. Proteomics">
        <title>Proteomics-based identification of novel factor inhibiting hypoxia-inducible factor (FIH) substrates indicates widespread asparaginyl hydroxylation of ankyrin repeat domain-containing proteins.</title>
        <authorList>
            <person name="Cockman M.E."/>
            <person name="Webb J.D."/>
            <person name="Kramer H.B."/>
            <person name="Kessler B.M."/>
            <person name="Ratcliffe P.J."/>
        </authorList>
    </citation>
    <scope>INTERACTION WITH HIF1AN</scope>
    <scope>HYDROXYLATION AT ASN-203; ASN-271; ASN-427; ASN-518; ASN-586; ASN-671; ASN-706 AND ASN-739</scope>
</reference>
<reference key="12">
    <citation type="journal article" date="2009" name="Nature">
        <title>Tankyrase inhibition stabilizes axin and antagonizes Wnt signalling.</title>
        <authorList>
            <person name="Huang S.M."/>
            <person name="Mishina Y.M."/>
            <person name="Liu S."/>
            <person name="Cheung A."/>
            <person name="Stegmeier F."/>
            <person name="Michaud G.A."/>
            <person name="Charlat O."/>
            <person name="Wiellette E."/>
            <person name="Zhang Y."/>
            <person name="Wiessner S."/>
            <person name="Hild M."/>
            <person name="Shi X."/>
            <person name="Wilson C.J."/>
            <person name="Mickanin C."/>
            <person name="Myer V."/>
            <person name="Fazal A."/>
            <person name="Tomlinson R."/>
            <person name="Serluca F."/>
            <person name="Shao W."/>
            <person name="Cheng H."/>
            <person name="Shultz M."/>
            <person name="Rau C."/>
            <person name="Schirle M."/>
            <person name="Schlegl J."/>
            <person name="Ghidelli S."/>
            <person name="Fawell S."/>
            <person name="Lu C."/>
            <person name="Curtis D."/>
            <person name="Kirschner M.W."/>
            <person name="Lengauer C."/>
            <person name="Finan P.M."/>
            <person name="Tallarico J.A."/>
            <person name="Bouwmeester T."/>
            <person name="Porter J.A."/>
            <person name="Bauer A."/>
            <person name="Cong F."/>
        </authorList>
    </citation>
    <scope>FUNCTION</scope>
    <scope>CATALYTIC ACTIVITY</scope>
    <scope>ACTIVITY REGULATION</scope>
    <scope>INTERACTION WITH AXIN1 AND AXIN2</scope>
    <scope>MUTAGENESIS OF MET-1054</scope>
</reference>
<reference key="13">
    <citation type="journal article" date="2010" name="Trends Biochem. Sci.">
        <title>Toward a unified nomenclature for mammalian ADP-ribosyltransferases.</title>
        <authorList>
            <person name="Hottiger M.O."/>
            <person name="Hassa P.O."/>
            <person name="Luscher B."/>
            <person name="Schuler H."/>
            <person name="Koch-Nolte F."/>
        </authorList>
    </citation>
    <scope>NOMENCLATURE</scope>
</reference>
<reference key="14">
    <citation type="journal article" date="2011" name="Nat. Cell Biol.">
        <title>RNF146 is a poly(ADP-ribose)-directed E3 ligase that regulates axin degradation and Wnt signalling.</title>
        <authorList>
            <person name="Zhang Y."/>
            <person name="Liu S."/>
            <person name="Mickanin C."/>
            <person name="Feng Y."/>
            <person name="Charlat O."/>
            <person name="Michaud G.A."/>
            <person name="Schirle M."/>
            <person name="Shi X."/>
            <person name="Hild M."/>
            <person name="Bauer A."/>
            <person name="Myer V.E."/>
            <person name="Finan P.M."/>
            <person name="Porter J.A."/>
            <person name="Huang S.M."/>
            <person name="Cong F."/>
        </authorList>
    </citation>
    <scope>FUNCTION</scope>
    <scope>CATALYTIC ACTIVITY</scope>
    <scope>INTERACTION WITH AXIN1; AXIN2; BLZF1 AND CASC3</scope>
    <scope>UBIQUITINATION</scope>
</reference>
<reference key="15">
    <citation type="journal article" date="2011" name="PLoS ONE">
        <title>Ubiquitin ligase RNF146 regulates tankyrase and Axin to promote Wnt signaling.</title>
        <authorList>
            <person name="Callow M.G."/>
            <person name="Tran H."/>
            <person name="Phu L."/>
            <person name="Lau T."/>
            <person name="Lee J."/>
            <person name="Sandoval W.N."/>
            <person name="Liu P.S."/>
            <person name="Bheddah S."/>
            <person name="Tao J."/>
            <person name="Lill J.R."/>
            <person name="Hongo J.A."/>
            <person name="Davis D."/>
            <person name="Kirkpatrick D.S."/>
            <person name="Polakis P."/>
            <person name="Costa M."/>
        </authorList>
    </citation>
    <scope>INTERACTION WITH RNF146</scope>
    <scope>UBIQUITINATION</scope>
    <scope>SUBCELLULAR LOCATION</scope>
</reference>
<reference key="16">
    <citation type="journal article" date="2013" name="Cell">
        <title>Proteasome regulation by ADP-ribosylation.</title>
        <authorList>
            <person name="Cho-Park P.F."/>
            <person name="Steller H."/>
        </authorList>
    </citation>
    <scope>FUNCTION</scope>
</reference>
<reference key="17">
    <citation type="journal article" date="2014" name="Nat. Commun.">
        <title>Family-wide analysis of poly(ADP-ribose) polymerase activity.</title>
        <authorList>
            <person name="Vyas S."/>
            <person name="Matic I."/>
            <person name="Uchima L."/>
            <person name="Rood J."/>
            <person name="Zaja R."/>
            <person name="Hay R.T."/>
            <person name="Ahel I."/>
            <person name="Chang P."/>
        </authorList>
    </citation>
    <scope>FUNCTION</scope>
</reference>
<reference key="18">
    <citation type="journal article" date="2021" name="J. Biol. Chem.">
        <title>Dissecting the molecular determinants of clinical PARP1 inhibitor selectivity for tankyrase1.</title>
        <authorList>
            <person name="Ryan K."/>
            <person name="Bolanos B."/>
            <person name="Smith M."/>
            <person name="Palde P.B."/>
            <person name="Cuenca P.D."/>
            <person name="VanArsdale T.L."/>
            <person name="Niessen S."/>
            <person name="Zhang L."/>
            <person name="Behenna D."/>
            <person name="Ornelas M.A."/>
            <person name="Tran K.T."/>
            <person name="Kaiser S."/>
            <person name="Lum L."/>
            <person name="Stewart A."/>
            <person name="Gajiwala K.S."/>
        </authorList>
    </citation>
    <scope>ACTIVITY REGULATION</scope>
</reference>
<reference key="19">
    <citation type="journal article" date="2011" name="FEBS J.">
        <title>Factor-inhibiting hypoxia-inducible factor (FIH) catalyses the post-translational hydroxylation of histidinyl residues within ankyrin repeat domains.</title>
        <authorList>
            <person name="Yang M."/>
            <person name="Chowdhury R."/>
            <person name="Ge W."/>
            <person name="Hamed R.B."/>
            <person name="McDonough M.A."/>
            <person name="Claridge T.D."/>
            <person name="Kessler B.M."/>
            <person name="Cockman M.E."/>
            <person name="Ratcliffe P.J."/>
            <person name="Schofield C.J."/>
        </authorList>
    </citation>
    <scope>X-RAY CRYSTALLOGRAPHY (2.28 ANGSTROMS) OF 538-558 IN COMPLEX WITH HIF1AN; IRON AND 2-OXOGLUTARATE</scope>
    <scope>HYDROXYLATION AT HIS-238 AND HIS-553</scope>
    <scope>MUTAGENESIS OF HIS-553</scope>
</reference>
<proteinExistence type="evidence at protein level"/>
<gene>
    <name evidence="18" type="primary">TNKS2</name>
    <name evidence="16" type="synonym">PARP5B</name>
    <name type="synonym">TANK2</name>
    <name type="synonym">TNKL</name>
</gene>
<dbReference type="EC" id="2.4.2.30" evidence="9 11"/>
<dbReference type="EC" id="2.4.2.-" evidence="9 14"/>
<dbReference type="EMBL" id="AF305081">
    <property type="protein sequence ID" value="AAG25674.1"/>
    <property type="status" value="ALT_INIT"/>
    <property type="molecule type" value="mRNA"/>
</dbReference>
<dbReference type="EMBL" id="AF264912">
    <property type="protein sequence ID" value="AAG44694.1"/>
    <property type="molecule type" value="mRNA"/>
</dbReference>
<dbReference type="EMBL" id="AF329696">
    <property type="protein sequence ID" value="AAK13463.1"/>
    <property type="molecule type" value="mRNA"/>
</dbReference>
<dbReference type="EMBL" id="AF342982">
    <property type="protein sequence ID" value="AAK25811.1"/>
    <property type="molecule type" value="mRNA"/>
</dbReference>
<dbReference type="EMBL" id="AF309033">
    <property type="protein sequence ID" value="AAK82330.1"/>
    <property type="molecule type" value="mRNA"/>
</dbReference>
<dbReference type="EMBL" id="AF438201">
    <property type="protein sequence ID" value="AAL40795.1"/>
    <property type="molecule type" value="mRNA"/>
</dbReference>
<dbReference type="EMBL" id="AK023746">
    <property type="protein sequence ID" value="BAB14665.1"/>
    <property type="status" value="ALT_INIT"/>
    <property type="molecule type" value="mRNA"/>
</dbReference>
<dbReference type="EMBL" id="AK314612">
    <property type="protein sequence ID" value="BAG37180.1"/>
    <property type="molecule type" value="mRNA"/>
</dbReference>
<dbReference type="EMBL" id="AL359707">
    <property type="status" value="NOT_ANNOTATED_CDS"/>
    <property type="molecule type" value="Genomic_DNA"/>
</dbReference>
<dbReference type="CCDS" id="CCDS7417.1"/>
<dbReference type="RefSeq" id="NP_079511.1">
    <property type="nucleotide sequence ID" value="NM_025235.4"/>
</dbReference>
<dbReference type="PDB" id="2Y0I">
    <property type="method" value="X-ray"/>
    <property type="resolution" value="2.28 A"/>
    <property type="chains" value="S=538-558"/>
</dbReference>
<dbReference type="PDB" id="3KR7">
    <property type="method" value="X-ray"/>
    <property type="resolution" value="1.95 A"/>
    <property type="chains" value="A=946-1162"/>
</dbReference>
<dbReference type="PDB" id="3KR8">
    <property type="method" value="X-ray"/>
    <property type="resolution" value="2.10 A"/>
    <property type="chains" value="A/C=946-1162"/>
</dbReference>
<dbReference type="PDB" id="3MHJ">
    <property type="method" value="X-ray"/>
    <property type="resolution" value="1.80 A"/>
    <property type="chains" value="A/B=946-1162"/>
</dbReference>
<dbReference type="PDB" id="3MHK">
    <property type="method" value="X-ray"/>
    <property type="resolution" value="2.30 A"/>
    <property type="chains" value="A=952-1166"/>
</dbReference>
<dbReference type="PDB" id="3P0N">
    <property type="method" value="X-ray"/>
    <property type="resolution" value="1.90 A"/>
    <property type="chains" value="A/C=946-1162"/>
</dbReference>
<dbReference type="PDB" id="3P0P">
    <property type="method" value="X-ray"/>
    <property type="resolution" value="2.49 A"/>
    <property type="chains" value="A/C=946-1162"/>
</dbReference>
<dbReference type="PDB" id="3P0Q">
    <property type="method" value="X-ray"/>
    <property type="resolution" value="1.90 A"/>
    <property type="chains" value="A/C=946-1162"/>
</dbReference>
<dbReference type="PDB" id="3TWQ">
    <property type="method" value="X-ray"/>
    <property type="resolution" value="2.15 A"/>
    <property type="chains" value="A/B=484-655"/>
</dbReference>
<dbReference type="PDB" id="3TWR">
    <property type="method" value="X-ray"/>
    <property type="resolution" value="1.55 A"/>
    <property type="chains" value="A/B/C/D=488-649"/>
</dbReference>
<dbReference type="PDB" id="3TWS">
    <property type="method" value="X-ray"/>
    <property type="resolution" value="1.70 A"/>
    <property type="chains" value="A/B/C/D=488-649"/>
</dbReference>
<dbReference type="PDB" id="3TWT">
    <property type="method" value="X-ray"/>
    <property type="resolution" value="1.85 A"/>
    <property type="chains" value="A/B/C/D=488-649"/>
</dbReference>
<dbReference type="PDB" id="3TWU">
    <property type="method" value="X-ray"/>
    <property type="resolution" value="1.80 A"/>
    <property type="chains" value="A=488-649"/>
</dbReference>
<dbReference type="PDB" id="3TWV">
    <property type="method" value="X-ray"/>
    <property type="resolution" value="2.30 A"/>
    <property type="chains" value="A/B/C/D=488-649"/>
</dbReference>
<dbReference type="PDB" id="3TWW">
    <property type="method" value="X-ray"/>
    <property type="resolution" value="2.00 A"/>
    <property type="chains" value="A/B=488-649"/>
</dbReference>
<dbReference type="PDB" id="3TWX">
    <property type="method" value="X-ray"/>
    <property type="resolution" value="1.80 A"/>
    <property type="chains" value="A/B=488-649"/>
</dbReference>
<dbReference type="PDB" id="3U9H">
    <property type="method" value="X-ray"/>
    <property type="resolution" value="1.75 A"/>
    <property type="chains" value="A/B=946-1162"/>
</dbReference>
<dbReference type="PDB" id="3U9Y">
    <property type="method" value="X-ray"/>
    <property type="resolution" value="2.30 A"/>
    <property type="chains" value="A=946-1162"/>
</dbReference>
<dbReference type="PDB" id="3UA9">
    <property type="method" value="X-ray"/>
    <property type="resolution" value="2.15 A"/>
    <property type="chains" value="A/B=946-1162"/>
</dbReference>
<dbReference type="PDB" id="3W51">
    <property type="method" value="X-ray"/>
    <property type="resolution" value="2.00 A"/>
    <property type="chains" value="A/B=952-1161"/>
</dbReference>
<dbReference type="PDB" id="4AVU">
    <property type="method" value="X-ray"/>
    <property type="resolution" value="2.40 A"/>
    <property type="chains" value="A/B=946-1162"/>
</dbReference>
<dbReference type="PDB" id="4AVW">
    <property type="method" value="X-ray"/>
    <property type="resolution" value="2.15 A"/>
    <property type="chains" value="A/B=946-1162"/>
</dbReference>
<dbReference type="PDB" id="4BFP">
    <property type="method" value="X-ray"/>
    <property type="resolution" value="2.40 A"/>
    <property type="chains" value="A/B=946-1162"/>
</dbReference>
<dbReference type="PDB" id="4BJ9">
    <property type="method" value="X-ray"/>
    <property type="resolution" value="2.05 A"/>
    <property type="chains" value="A/B=946-1162"/>
</dbReference>
<dbReference type="PDB" id="4BJB">
    <property type="method" value="X-ray"/>
    <property type="resolution" value="2.30 A"/>
    <property type="chains" value="A=946-1162"/>
</dbReference>
<dbReference type="PDB" id="4BJC">
    <property type="method" value="X-ray"/>
    <property type="resolution" value="2.20 A"/>
    <property type="chains" value="A=946-1162"/>
</dbReference>
<dbReference type="PDB" id="4BS4">
    <property type="method" value="X-ray"/>
    <property type="resolution" value="1.89 A"/>
    <property type="chains" value="A/B=946-1162"/>
</dbReference>
<dbReference type="PDB" id="4BU3">
    <property type="method" value="X-ray"/>
    <property type="resolution" value="2.15 A"/>
    <property type="chains" value="A/B=946-1162"/>
</dbReference>
<dbReference type="PDB" id="4BU5">
    <property type="method" value="X-ray"/>
    <property type="resolution" value="1.80 A"/>
    <property type="chains" value="A/B=946-1162"/>
</dbReference>
<dbReference type="PDB" id="4BU6">
    <property type="method" value="X-ray"/>
    <property type="resolution" value="1.80 A"/>
    <property type="chains" value="A/B=946-1162"/>
</dbReference>
<dbReference type="PDB" id="4BU7">
    <property type="method" value="X-ray"/>
    <property type="resolution" value="2.05 A"/>
    <property type="chains" value="A/C=946-1162"/>
</dbReference>
<dbReference type="PDB" id="4BU8">
    <property type="method" value="X-ray"/>
    <property type="resolution" value="1.85 A"/>
    <property type="chains" value="A/C=946-1162"/>
</dbReference>
<dbReference type="PDB" id="4BU9">
    <property type="method" value="X-ray"/>
    <property type="resolution" value="1.65 A"/>
    <property type="chains" value="A/B=946-1162"/>
</dbReference>
<dbReference type="PDB" id="4BUA">
    <property type="method" value="X-ray"/>
    <property type="resolution" value="1.85 A"/>
    <property type="chains" value="A/C=946-1162"/>
</dbReference>
<dbReference type="PDB" id="4BUD">
    <property type="method" value="X-ray"/>
    <property type="resolution" value="2.50 A"/>
    <property type="chains" value="A/C=946-1162"/>
</dbReference>
<dbReference type="PDB" id="4BUE">
    <property type="method" value="X-ray"/>
    <property type="resolution" value="1.60 A"/>
    <property type="chains" value="A/B=946-1162"/>
</dbReference>
<dbReference type="PDB" id="4BUF">
    <property type="method" value="X-ray"/>
    <property type="resolution" value="2.50 A"/>
    <property type="chains" value="A/B=946-1162"/>
</dbReference>
<dbReference type="PDB" id="4BUI">
    <property type="method" value="X-ray"/>
    <property type="resolution" value="1.95 A"/>
    <property type="chains" value="A/C=946-1162"/>
</dbReference>
<dbReference type="PDB" id="4BUS">
    <property type="method" value="X-ray"/>
    <property type="resolution" value="1.90 A"/>
    <property type="chains" value="A/B=946-1162"/>
</dbReference>
<dbReference type="PDB" id="4BUT">
    <property type="method" value="X-ray"/>
    <property type="resolution" value="1.90 A"/>
    <property type="chains" value="A/B=946-1162"/>
</dbReference>
<dbReference type="PDB" id="4BUU">
    <property type="method" value="X-ray"/>
    <property type="resolution" value="1.60 A"/>
    <property type="chains" value="A/B=946-1162"/>
</dbReference>
<dbReference type="PDB" id="4BUV">
    <property type="method" value="X-ray"/>
    <property type="resolution" value="1.80 A"/>
    <property type="chains" value="A/C=946-1162"/>
</dbReference>
<dbReference type="PDB" id="4BUW">
    <property type="method" value="X-ray"/>
    <property type="resolution" value="1.85 A"/>
    <property type="chains" value="A/B=946-1162"/>
</dbReference>
<dbReference type="PDB" id="4BUX">
    <property type="method" value="X-ray"/>
    <property type="resolution" value="1.95 A"/>
    <property type="chains" value="A/C=946-1162"/>
</dbReference>
<dbReference type="PDB" id="4BUY">
    <property type="method" value="X-ray"/>
    <property type="resolution" value="1.90 A"/>
    <property type="chains" value="A/B=946-1162"/>
</dbReference>
<dbReference type="PDB" id="4HKI">
    <property type="method" value="X-ray"/>
    <property type="resolution" value="2.15 A"/>
    <property type="chains" value="A/H=946-1113, C/D=1114-1162"/>
</dbReference>
<dbReference type="PDB" id="4HKK">
    <property type="method" value="X-ray"/>
    <property type="resolution" value="1.95 A"/>
    <property type="chains" value="A/C=946-1113, B/D=1114-1162"/>
</dbReference>
<dbReference type="PDB" id="4HKN">
    <property type="method" value="X-ray"/>
    <property type="resolution" value="2.05 A"/>
    <property type="chains" value="A=946-1113, C=1114-1162"/>
</dbReference>
<dbReference type="PDB" id="4HL5">
    <property type="method" value="X-ray"/>
    <property type="resolution" value="2.20 A"/>
    <property type="chains" value="A=946-1113, C=1114-1162"/>
</dbReference>
<dbReference type="PDB" id="4HLF">
    <property type="method" value="X-ray"/>
    <property type="resolution" value="2.15 A"/>
    <property type="chains" value="A/B=946-1113, C/D=1114-1162"/>
</dbReference>
<dbReference type="PDB" id="4HLG">
    <property type="method" value="X-ray"/>
    <property type="resolution" value="2.00 A"/>
    <property type="chains" value="A/B=946-1113, C/D=1114-1162"/>
</dbReference>
<dbReference type="PDB" id="4HLH">
    <property type="method" value="X-ray"/>
    <property type="resolution" value="1.75 A"/>
    <property type="chains" value="A/B=946-1113, C/D=1114-1162"/>
</dbReference>
<dbReference type="PDB" id="4HLK">
    <property type="method" value="X-ray"/>
    <property type="resolution" value="2.00 A"/>
    <property type="chains" value="A/B=946-1113, C/D=1114-1162"/>
</dbReference>
<dbReference type="PDB" id="4HLM">
    <property type="method" value="X-ray"/>
    <property type="resolution" value="1.95 A"/>
    <property type="chains" value="A/B=946-1113, C/D=1114-1162"/>
</dbReference>
<dbReference type="PDB" id="4HMH">
    <property type="method" value="X-ray"/>
    <property type="resolution" value="2.30 A"/>
    <property type="chains" value="A=946-1113, C=1114-1162"/>
</dbReference>
<dbReference type="PDB" id="4HYF">
    <property type="method" value="X-ray"/>
    <property type="resolution" value="2.80 A"/>
    <property type="chains" value="A/B/C=946-1162"/>
</dbReference>
<dbReference type="PDB" id="4IUE">
    <property type="method" value="X-ray"/>
    <property type="resolution" value="2.38 A"/>
    <property type="chains" value="A=952-1161"/>
</dbReference>
<dbReference type="PDB" id="4J1Z">
    <property type="method" value="X-ray"/>
    <property type="resolution" value="2.00 A"/>
    <property type="chains" value="A/B=952-1161"/>
</dbReference>
<dbReference type="PDB" id="4J21">
    <property type="method" value="X-ray"/>
    <property type="resolution" value="1.93 A"/>
    <property type="chains" value="A=952-1161"/>
</dbReference>
<dbReference type="PDB" id="4J22">
    <property type="method" value="X-ray"/>
    <property type="resolution" value="2.12 A"/>
    <property type="chains" value="A/B=952-1161"/>
</dbReference>
<dbReference type="PDB" id="4J3L">
    <property type="method" value="X-ray"/>
    <property type="resolution" value="2.09 A"/>
    <property type="chains" value="A=952-1161"/>
</dbReference>
<dbReference type="PDB" id="4J3M">
    <property type="method" value="X-ray"/>
    <property type="resolution" value="1.90 A"/>
    <property type="chains" value="A/B=952-1161"/>
</dbReference>
<dbReference type="PDB" id="4KZL">
    <property type="method" value="X-ray"/>
    <property type="resolution" value="2.00 A"/>
    <property type="chains" value="A/B=946-1113, C/D=1114-1162"/>
</dbReference>
<dbReference type="PDB" id="4KZQ">
    <property type="method" value="X-ray"/>
    <property type="resolution" value="2.25 A"/>
    <property type="chains" value="A/B=946-1113, C/D=1114-1162"/>
</dbReference>
<dbReference type="PDB" id="4KZU">
    <property type="method" value="X-ray"/>
    <property type="resolution" value="2.10 A"/>
    <property type="chains" value="A/B=946-1113, C/D=1114-1162"/>
</dbReference>
<dbReference type="PDB" id="4L09">
    <property type="method" value="X-ray"/>
    <property type="resolution" value="2.05 A"/>
    <property type="chains" value="A/B=946-1113, C/D=1114-1162"/>
</dbReference>
<dbReference type="PDB" id="4L0B">
    <property type="method" value="X-ray"/>
    <property type="resolution" value="1.80 A"/>
    <property type="chains" value="A/B=946-1113, C/D=1114-1162"/>
</dbReference>
<dbReference type="PDB" id="4L0I">
    <property type="method" value="X-ray"/>
    <property type="resolution" value="2.30 A"/>
    <property type="chains" value="A/B=946-1113, C/D=1114-1162"/>
</dbReference>
<dbReference type="PDB" id="4L0S">
    <property type="method" value="X-ray"/>
    <property type="resolution" value="1.90 A"/>
    <property type="chains" value="A/B=946-1113, C/D=1114-1162"/>
</dbReference>
<dbReference type="PDB" id="4L0T">
    <property type="method" value="X-ray"/>
    <property type="resolution" value="2.10 A"/>
    <property type="chains" value="A/B=946-1113, C/D=1114-1162"/>
</dbReference>
<dbReference type="PDB" id="4L0V">
    <property type="method" value="X-ray"/>
    <property type="resolution" value="1.70 A"/>
    <property type="chains" value="A/B=946-1113, C/D=1114-1162"/>
</dbReference>
<dbReference type="PDB" id="4L10">
    <property type="method" value="X-ray"/>
    <property type="resolution" value="1.70 A"/>
    <property type="chains" value="A/B=946-1113, C/D=1114-1162"/>
</dbReference>
<dbReference type="PDB" id="4L2F">
    <property type="method" value="X-ray"/>
    <property type="resolution" value="2.05 A"/>
    <property type="chains" value="A/B=946-1113, C/D=1114-1162"/>
</dbReference>
<dbReference type="PDB" id="4L2G">
    <property type="method" value="X-ray"/>
    <property type="resolution" value="2.05 A"/>
    <property type="chains" value="A/B=946-1113, C/D=1114-1162"/>
</dbReference>
<dbReference type="PDB" id="4L2K">
    <property type="method" value="X-ray"/>
    <property type="resolution" value="2.10 A"/>
    <property type="chains" value="A/B=946-1113, C/D=1114-1162"/>
</dbReference>
<dbReference type="PDB" id="4L31">
    <property type="method" value="X-ray"/>
    <property type="resolution" value="2.00 A"/>
    <property type="chains" value="A/B=946-1113, C/D=1114-1162"/>
</dbReference>
<dbReference type="PDB" id="4L32">
    <property type="method" value="X-ray"/>
    <property type="resolution" value="1.85 A"/>
    <property type="chains" value="A/B=946-1113, C/D=1114-1162"/>
</dbReference>
<dbReference type="PDB" id="4L33">
    <property type="method" value="X-ray"/>
    <property type="resolution" value="2.10 A"/>
    <property type="chains" value="A/B=946-1113, C/D=1114-1162"/>
</dbReference>
<dbReference type="PDB" id="4L34">
    <property type="method" value="X-ray"/>
    <property type="resolution" value="1.80 A"/>
    <property type="chains" value="A/B=946-1113, C/D=1114-1162"/>
</dbReference>
<dbReference type="PDB" id="4M7B">
    <property type="method" value="X-ray"/>
    <property type="resolution" value="1.95 A"/>
    <property type="chains" value="A/C=946-1162"/>
</dbReference>
<dbReference type="PDB" id="4PML">
    <property type="method" value="X-ray"/>
    <property type="resolution" value="1.87 A"/>
    <property type="chains" value="A/B/C/D=959-1164"/>
</dbReference>
<dbReference type="PDB" id="4PNL">
    <property type="method" value="X-ray"/>
    <property type="resolution" value="1.50 A"/>
    <property type="chains" value="A/B/C/D=959-1164"/>
</dbReference>
<dbReference type="PDB" id="4PNM">
    <property type="method" value="X-ray"/>
    <property type="resolution" value="2.19 A"/>
    <property type="chains" value="A/B/C/D=959-1164"/>
</dbReference>
<dbReference type="PDB" id="4PNN">
    <property type="method" value="X-ray"/>
    <property type="resolution" value="1.65 A"/>
    <property type="chains" value="A/B/C/D=959-1164"/>
</dbReference>
<dbReference type="PDB" id="4PNQ">
    <property type="method" value="X-ray"/>
    <property type="resolution" value="1.85 A"/>
    <property type="chains" value="A/B/C/D=959-1164"/>
</dbReference>
<dbReference type="PDB" id="4PNR">
    <property type="method" value="X-ray"/>
    <property type="resolution" value="1.71 A"/>
    <property type="chains" value="A/B/C/D=959-1164"/>
</dbReference>
<dbReference type="PDB" id="4PNS">
    <property type="method" value="X-ray"/>
    <property type="resolution" value="1.65 A"/>
    <property type="chains" value="A/B/C/D=959-1164"/>
</dbReference>
<dbReference type="PDB" id="4PNT">
    <property type="method" value="X-ray"/>
    <property type="resolution" value="1.60 A"/>
    <property type="chains" value="A/B/C/D=959-1164"/>
</dbReference>
<dbReference type="PDB" id="4TJU">
    <property type="method" value="X-ray"/>
    <property type="resolution" value="1.57 A"/>
    <property type="chains" value="A/B/C/D=959-1164"/>
</dbReference>
<dbReference type="PDB" id="4TJW">
    <property type="method" value="X-ray"/>
    <property type="resolution" value="1.70 A"/>
    <property type="chains" value="A/B/C/D=959-1164"/>
</dbReference>
<dbReference type="PDB" id="4TJY">
    <property type="method" value="X-ray"/>
    <property type="resolution" value="1.90 A"/>
    <property type="chains" value="A/B/C/D=959-1164"/>
</dbReference>
<dbReference type="PDB" id="4TK0">
    <property type="method" value="X-ray"/>
    <property type="resolution" value="1.65 A"/>
    <property type="chains" value="A/B/C/D=959-1164"/>
</dbReference>
<dbReference type="PDB" id="4TK5">
    <property type="method" value="X-ray"/>
    <property type="resolution" value="2.02 A"/>
    <property type="chains" value="A/B/C/D=959-1164"/>
</dbReference>
<dbReference type="PDB" id="4TKF">
    <property type="method" value="X-ray"/>
    <property type="resolution" value="2.60 A"/>
    <property type="chains" value="A/B/C/D=959-1164"/>
</dbReference>
<dbReference type="PDB" id="4TKG">
    <property type="method" value="X-ray"/>
    <property type="resolution" value="1.95 A"/>
    <property type="chains" value="A/B/C/D=959-1164"/>
</dbReference>
<dbReference type="PDB" id="4TKI">
    <property type="method" value="X-ray"/>
    <property type="resolution" value="2.15 A"/>
    <property type="chains" value="A/B/C/D=959-1164"/>
</dbReference>
<dbReference type="PDB" id="4UFU">
    <property type="method" value="X-ray"/>
    <property type="resolution" value="2.10 A"/>
    <property type="chains" value="A/B=946-1162"/>
</dbReference>
<dbReference type="PDB" id="4UFY">
    <property type="method" value="X-ray"/>
    <property type="resolution" value="1.70 A"/>
    <property type="chains" value="A/B=946-1162"/>
</dbReference>
<dbReference type="PDB" id="4UHG">
    <property type="method" value="X-ray"/>
    <property type="resolution" value="1.70 A"/>
    <property type="chains" value="A/B=946-1162"/>
</dbReference>
<dbReference type="PDB" id="4UI3">
    <property type="method" value="X-ray"/>
    <property type="resolution" value="2.00 A"/>
    <property type="chains" value="A/B=946-1113, C/D=1115-1162"/>
</dbReference>
<dbReference type="PDB" id="4UI4">
    <property type="method" value="X-ray"/>
    <property type="resolution" value="2.40 A"/>
    <property type="chains" value="A/B=946-1113, C/D=1115-1162"/>
</dbReference>
<dbReference type="PDB" id="4UI5">
    <property type="method" value="X-ray"/>
    <property type="resolution" value="1.65 A"/>
    <property type="chains" value="A/B=946-1113, C/D=1115-1162"/>
</dbReference>
<dbReference type="PDB" id="4UI6">
    <property type="method" value="X-ray"/>
    <property type="resolution" value="1.80 A"/>
    <property type="chains" value="A/B=946-1113, C/D=1115-1162"/>
</dbReference>
<dbReference type="PDB" id="4UI7">
    <property type="method" value="X-ray"/>
    <property type="resolution" value="1.80 A"/>
    <property type="chains" value="A/B=946-1113, C/D=1115-1162"/>
</dbReference>
<dbReference type="PDB" id="4UI8">
    <property type="method" value="X-ray"/>
    <property type="resolution" value="2.05 A"/>
    <property type="chains" value="A/B=946-1113, C/D=1115-1162"/>
</dbReference>
<dbReference type="PDB" id="4UVL">
    <property type="method" value="X-ray"/>
    <property type="resolution" value="2.00 A"/>
    <property type="chains" value="A/C=946-1162"/>
</dbReference>
<dbReference type="PDB" id="4UVN">
    <property type="method" value="X-ray"/>
    <property type="resolution" value="2.20 A"/>
    <property type="chains" value="A/B=946-1162"/>
</dbReference>
<dbReference type="PDB" id="4UVO">
    <property type="method" value="X-ray"/>
    <property type="resolution" value="1.85 A"/>
    <property type="chains" value="A/B=946-1162"/>
</dbReference>
<dbReference type="PDB" id="4UVP">
    <property type="method" value="X-ray"/>
    <property type="resolution" value="1.75 A"/>
    <property type="chains" value="A/C=946-1113, B/D=1115-1162"/>
</dbReference>
<dbReference type="PDB" id="4UVS">
    <property type="method" value="X-ray"/>
    <property type="resolution" value="2.00 A"/>
    <property type="chains" value="A/C=946-1162"/>
</dbReference>
<dbReference type="PDB" id="4UVT">
    <property type="method" value="X-ray"/>
    <property type="resolution" value="1.95 A"/>
    <property type="chains" value="A/C=946-1162"/>
</dbReference>
<dbReference type="PDB" id="4UVU">
    <property type="method" value="X-ray"/>
    <property type="resolution" value="1.95 A"/>
    <property type="chains" value="A/B=946-1162"/>
</dbReference>
<dbReference type="PDB" id="4UVV">
    <property type="method" value="X-ray"/>
    <property type="resolution" value="1.90 A"/>
    <property type="chains" value="A/B=946-1162"/>
</dbReference>
<dbReference type="PDB" id="4UVW">
    <property type="method" value="X-ray"/>
    <property type="resolution" value="2.10 A"/>
    <property type="chains" value="A/B=946-1162"/>
</dbReference>
<dbReference type="PDB" id="4UVX">
    <property type="method" value="X-ray"/>
    <property type="resolution" value="1.95 A"/>
    <property type="chains" value="A/B=946-1162"/>
</dbReference>
<dbReference type="PDB" id="4UVY">
    <property type="method" value="X-ray"/>
    <property type="resolution" value="1.95 A"/>
    <property type="chains" value="A/B=946-1162"/>
</dbReference>
<dbReference type="PDB" id="4UVZ">
    <property type="method" value="X-ray"/>
    <property type="resolution" value="1.60 A"/>
    <property type="chains" value="A/C=946-1162"/>
</dbReference>
<dbReference type="PDB" id="4UX4">
    <property type="method" value="X-ray"/>
    <property type="resolution" value="1.80 A"/>
    <property type="chains" value="A/B=946-1162"/>
</dbReference>
<dbReference type="PDB" id="4W5I">
    <property type="method" value="X-ray"/>
    <property type="resolution" value="1.95 A"/>
    <property type="chains" value="A/B=952-1162"/>
</dbReference>
<dbReference type="PDB" id="4Z68">
    <property type="method" value="X-ray"/>
    <property type="resolution" value="1.86 A"/>
    <property type="chains" value="A=490-644"/>
</dbReference>
<dbReference type="PDB" id="5ADQ">
    <property type="method" value="X-ray"/>
    <property type="resolution" value="2.10 A"/>
    <property type="chains" value="A=946-1113, B=1115-1162"/>
</dbReference>
<dbReference type="PDB" id="5ADR">
    <property type="method" value="X-ray"/>
    <property type="resolution" value="2.10 A"/>
    <property type="chains" value="A=946-1113, B=1115-1162"/>
</dbReference>
<dbReference type="PDB" id="5ADS">
    <property type="method" value="X-ray"/>
    <property type="resolution" value="1.80 A"/>
    <property type="chains" value="A=946-1113, B=1115-1162"/>
</dbReference>
<dbReference type="PDB" id="5ADT">
    <property type="method" value="X-ray"/>
    <property type="resolution" value="2.15 A"/>
    <property type="chains" value="A=946-1113, B=1115-1162"/>
</dbReference>
<dbReference type="PDB" id="5AEH">
    <property type="method" value="X-ray"/>
    <property type="resolution" value="1.85 A"/>
    <property type="chains" value="A/B=946-1162"/>
</dbReference>
<dbReference type="PDB" id="5AKU">
    <property type="method" value="X-ray"/>
    <property type="resolution" value="1.80 A"/>
    <property type="chains" value="A/B=946-1162"/>
</dbReference>
<dbReference type="PDB" id="5AKW">
    <property type="method" value="X-ray"/>
    <property type="resolution" value="2.07 A"/>
    <property type="chains" value="A/B=946-1162"/>
</dbReference>
<dbReference type="PDB" id="5AL1">
    <property type="method" value="X-ray"/>
    <property type="resolution" value="1.75 A"/>
    <property type="chains" value="A/B=946-1162"/>
</dbReference>
<dbReference type="PDB" id="5AL2">
    <property type="method" value="X-ray"/>
    <property type="resolution" value="1.90 A"/>
    <property type="chains" value="A/B=946-1162"/>
</dbReference>
<dbReference type="PDB" id="5AL3">
    <property type="method" value="X-ray"/>
    <property type="resolution" value="1.75 A"/>
    <property type="chains" value="A/B=946-1162"/>
</dbReference>
<dbReference type="PDB" id="5AL4">
    <property type="method" value="X-ray"/>
    <property type="resolution" value="1.90 A"/>
    <property type="chains" value="A/B=946-1162"/>
</dbReference>
<dbReference type="PDB" id="5AL5">
    <property type="method" value="X-ray"/>
    <property type="resolution" value="2.05 A"/>
    <property type="chains" value="A/B=946-1162"/>
</dbReference>
<dbReference type="PDB" id="5BXO">
    <property type="method" value="X-ray"/>
    <property type="resolution" value="1.33 A"/>
    <property type="chains" value="A/B=488-649"/>
</dbReference>
<dbReference type="PDB" id="5BXU">
    <property type="method" value="X-ray"/>
    <property type="resolution" value="1.35 A"/>
    <property type="chains" value="A=488-649"/>
</dbReference>
<dbReference type="PDB" id="5C5P">
    <property type="method" value="X-ray"/>
    <property type="resolution" value="1.75 A"/>
    <property type="chains" value="A/B=946-1113, C/D=1114-1162"/>
</dbReference>
<dbReference type="PDB" id="5C5Q">
    <property type="method" value="X-ray"/>
    <property type="resolution" value="2.00 A"/>
    <property type="chains" value="A/B=946-1113, C/D=1114-1162"/>
</dbReference>
<dbReference type="PDB" id="5C5R">
    <property type="method" value="X-ray"/>
    <property type="resolution" value="1.55 A"/>
    <property type="chains" value="A/B=946-1113, C/D=1114-1162"/>
</dbReference>
<dbReference type="PDB" id="5DCZ">
    <property type="method" value="X-ray"/>
    <property type="resolution" value="2.23 A"/>
    <property type="chains" value="A=936-1166"/>
</dbReference>
<dbReference type="PDB" id="5FPF">
    <property type="method" value="X-ray"/>
    <property type="resolution" value="2.60 A"/>
    <property type="chains" value="A/B=946-1113, C/D=1115-1162"/>
</dbReference>
<dbReference type="PDB" id="5FPG">
    <property type="method" value="X-ray"/>
    <property type="resolution" value="2.75 A"/>
    <property type="chains" value="A/B=946-1162"/>
</dbReference>
<dbReference type="PDB" id="5JRT">
    <property type="method" value="X-ray"/>
    <property type="resolution" value="1.53 A"/>
    <property type="chains" value="A=867-940"/>
</dbReference>
<dbReference type="PDB" id="5NOB">
    <property type="method" value="X-ray"/>
    <property type="resolution" value="1.85 A"/>
    <property type="chains" value="A/B=946-1162"/>
</dbReference>
<dbReference type="PDB" id="5NSP">
    <property type="method" value="X-ray"/>
    <property type="resolution" value="2.30 A"/>
    <property type="chains" value="A/B=946-1113, C/D=1114-1162"/>
</dbReference>
<dbReference type="PDB" id="5NUT">
    <property type="method" value="X-ray"/>
    <property type="resolution" value="1.60 A"/>
    <property type="chains" value="A/B=952-1162"/>
</dbReference>
<dbReference type="PDB" id="5OWS">
    <property type="method" value="X-ray"/>
    <property type="resolution" value="1.80 A"/>
    <property type="chains" value="A/B=946-1162"/>
</dbReference>
<dbReference type="PDB" id="5OWT">
    <property type="method" value="X-ray"/>
    <property type="resolution" value="2.20 A"/>
    <property type="chains" value="A/B=946-1162"/>
</dbReference>
<dbReference type="PDB" id="6TG4">
    <property type="method" value="X-ray"/>
    <property type="resolution" value="2.76 A"/>
    <property type="chains" value="AAA/BBB=946-1162"/>
</dbReference>
<dbReference type="PDB" id="6TKM">
    <property type="method" value="X-ray"/>
    <property type="resolution" value="2.70 A"/>
    <property type="chains" value="AAA/BBB=946-1162"/>
</dbReference>
<dbReference type="PDB" id="6TKN">
    <property type="method" value="X-ray"/>
    <property type="resolution" value="2.50 A"/>
    <property type="chains" value="AAA/BBB=946-1162"/>
</dbReference>
<dbReference type="PDB" id="6TKP">
    <property type="method" value="X-ray"/>
    <property type="resolution" value="2.40 A"/>
    <property type="chains" value="AAA/BBB=946-1162"/>
</dbReference>
<dbReference type="PDB" id="6TKQ">
    <property type="method" value="X-ray"/>
    <property type="resolution" value="2.50 A"/>
    <property type="chains" value="AAA/BBB=946-1162"/>
</dbReference>
<dbReference type="PDB" id="6TKR">
    <property type="method" value="X-ray"/>
    <property type="resolution" value="2.75 A"/>
    <property type="chains" value="AAA/BBB=946-1162"/>
</dbReference>
<dbReference type="PDB" id="6TKS">
    <property type="method" value="X-ray"/>
    <property type="resolution" value="2.50 A"/>
    <property type="chains" value="AAA/BBB=946-1162"/>
</dbReference>
<dbReference type="PDB" id="7A1S">
    <property type="method" value="X-ray"/>
    <property type="resolution" value="2.01 A"/>
    <property type="chains" value="B=691-710"/>
</dbReference>
<dbReference type="PDB" id="7O6X">
    <property type="method" value="X-ray"/>
    <property type="resolution" value="2.20 A"/>
    <property type="chains" value="AAA/BBB=946-1162"/>
</dbReference>
<dbReference type="PDB" id="7POX">
    <property type="method" value="X-ray"/>
    <property type="resolution" value="2.50 A"/>
    <property type="chains" value="AAA/BBB=946-1162"/>
</dbReference>
<dbReference type="PDB" id="7R3Z">
    <property type="method" value="X-ray"/>
    <property type="resolution" value="2.25 A"/>
    <property type="chains" value="A/B/C/D=946-1162"/>
</dbReference>
<dbReference type="PDB" id="8ALY">
    <property type="method" value="EM"/>
    <property type="resolution" value="2.98 A"/>
    <property type="chains" value="A/B/C/D/E/F/G/H/I/J/K/L/M/N/O/P/Q/R/S/T=867-1162"/>
</dbReference>
<dbReference type="PDBsum" id="2Y0I"/>
<dbReference type="PDBsum" id="3KR7"/>
<dbReference type="PDBsum" id="3KR8"/>
<dbReference type="PDBsum" id="3MHJ"/>
<dbReference type="PDBsum" id="3MHK"/>
<dbReference type="PDBsum" id="3P0N"/>
<dbReference type="PDBsum" id="3P0P"/>
<dbReference type="PDBsum" id="3P0Q"/>
<dbReference type="PDBsum" id="3TWQ"/>
<dbReference type="PDBsum" id="3TWR"/>
<dbReference type="PDBsum" id="3TWS"/>
<dbReference type="PDBsum" id="3TWT"/>
<dbReference type="PDBsum" id="3TWU"/>
<dbReference type="PDBsum" id="3TWV"/>
<dbReference type="PDBsum" id="3TWW"/>
<dbReference type="PDBsum" id="3TWX"/>
<dbReference type="PDBsum" id="3U9H"/>
<dbReference type="PDBsum" id="3U9Y"/>
<dbReference type="PDBsum" id="3UA9"/>
<dbReference type="PDBsum" id="3W51"/>
<dbReference type="PDBsum" id="4AVU"/>
<dbReference type="PDBsum" id="4AVW"/>
<dbReference type="PDBsum" id="4BFP"/>
<dbReference type="PDBsum" id="4BJ9"/>
<dbReference type="PDBsum" id="4BJB"/>
<dbReference type="PDBsum" id="4BJC"/>
<dbReference type="PDBsum" id="4BS4"/>
<dbReference type="PDBsum" id="4BU3"/>
<dbReference type="PDBsum" id="4BU5"/>
<dbReference type="PDBsum" id="4BU6"/>
<dbReference type="PDBsum" id="4BU7"/>
<dbReference type="PDBsum" id="4BU8"/>
<dbReference type="PDBsum" id="4BU9"/>
<dbReference type="PDBsum" id="4BUA"/>
<dbReference type="PDBsum" id="4BUD"/>
<dbReference type="PDBsum" id="4BUE"/>
<dbReference type="PDBsum" id="4BUF"/>
<dbReference type="PDBsum" id="4BUI"/>
<dbReference type="PDBsum" id="4BUS"/>
<dbReference type="PDBsum" id="4BUT"/>
<dbReference type="PDBsum" id="4BUU"/>
<dbReference type="PDBsum" id="4BUV"/>
<dbReference type="PDBsum" id="4BUW"/>
<dbReference type="PDBsum" id="4BUX"/>
<dbReference type="PDBsum" id="4BUY"/>
<dbReference type="PDBsum" id="4HKI"/>
<dbReference type="PDBsum" id="4HKK"/>
<dbReference type="PDBsum" id="4HKN"/>
<dbReference type="PDBsum" id="4HL5"/>
<dbReference type="PDBsum" id="4HLF"/>
<dbReference type="PDBsum" id="4HLG"/>
<dbReference type="PDBsum" id="4HLH"/>
<dbReference type="PDBsum" id="4HLK"/>
<dbReference type="PDBsum" id="4HLM"/>
<dbReference type="PDBsum" id="4HMH"/>
<dbReference type="PDBsum" id="4HYF"/>
<dbReference type="PDBsum" id="4IUE"/>
<dbReference type="PDBsum" id="4J1Z"/>
<dbReference type="PDBsum" id="4J21"/>
<dbReference type="PDBsum" id="4J22"/>
<dbReference type="PDBsum" id="4J3L"/>
<dbReference type="PDBsum" id="4J3M"/>
<dbReference type="PDBsum" id="4KZL"/>
<dbReference type="PDBsum" id="4KZQ"/>
<dbReference type="PDBsum" id="4KZU"/>
<dbReference type="PDBsum" id="4L09"/>
<dbReference type="PDBsum" id="4L0B"/>
<dbReference type="PDBsum" id="4L0I"/>
<dbReference type="PDBsum" id="4L0S"/>
<dbReference type="PDBsum" id="4L0T"/>
<dbReference type="PDBsum" id="4L0V"/>
<dbReference type="PDBsum" id="4L10"/>
<dbReference type="PDBsum" id="4L2F"/>
<dbReference type="PDBsum" id="4L2G"/>
<dbReference type="PDBsum" id="4L2K"/>
<dbReference type="PDBsum" id="4L31"/>
<dbReference type="PDBsum" id="4L32"/>
<dbReference type="PDBsum" id="4L33"/>
<dbReference type="PDBsum" id="4L34"/>
<dbReference type="PDBsum" id="4M7B"/>
<dbReference type="PDBsum" id="4PML"/>
<dbReference type="PDBsum" id="4PNL"/>
<dbReference type="PDBsum" id="4PNM"/>
<dbReference type="PDBsum" id="4PNN"/>
<dbReference type="PDBsum" id="4PNQ"/>
<dbReference type="PDBsum" id="4PNR"/>
<dbReference type="PDBsum" id="4PNS"/>
<dbReference type="PDBsum" id="4PNT"/>
<dbReference type="PDBsum" id="4TJU"/>
<dbReference type="PDBsum" id="4TJW"/>
<dbReference type="PDBsum" id="4TJY"/>
<dbReference type="PDBsum" id="4TK0"/>
<dbReference type="PDBsum" id="4TK5"/>
<dbReference type="PDBsum" id="4TKF"/>
<dbReference type="PDBsum" id="4TKG"/>
<dbReference type="PDBsum" id="4TKI"/>
<dbReference type="PDBsum" id="4UFU"/>
<dbReference type="PDBsum" id="4UFY"/>
<dbReference type="PDBsum" id="4UHG"/>
<dbReference type="PDBsum" id="4UI3"/>
<dbReference type="PDBsum" id="4UI4"/>
<dbReference type="PDBsum" id="4UI5"/>
<dbReference type="PDBsum" id="4UI6"/>
<dbReference type="PDBsum" id="4UI7"/>
<dbReference type="PDBsum" id="4UI8"/>
<dbReference type="PDBsum" id="4UVL"/>
<dbReference type="PDBsum" id="4UVN"/>
<dbReference type="PDBsum" id="4UVO"/>
<dbReference type="PDBsum" id="4UVP"/>
<dbReference type="PDBsum" id="4UVS"/>
<dbReference type="PDBsum" id="4UVT"/>
<dbReference type="PDBsum" id="4UVU"/>
<dbReference type="PDBsum" id="4UVV"/>
<dbReference type="PDBsum" id="4UVW"/>
<dbReference type="PDBsum" id="4UVX"/>
<dbReference type="PDBsum" id="4UVY"/>
<dbReference type="PDBsum" id="4UVZ"/>
<dbReference type="PDBsum" id="4UX4"/>
<dbReference type="PDBsum" id="4W5I"/>
<dbReference type="PDBsum" id="4Z68"/>
<dbReference type="PDBsum" id="5ADQ"/>
<dbReference type="PDBsum" id="5ADR"/>
<dbReference type="PDBsum" id="5ADS"/>
<dbReference type="PDBsum" id="5ADT"/>
<dbReference type="PDBsum" id="5AEH"/>
<dbReference type="PDBsum" id="5AKU"/>
<dbReference type="PDBsum" id="5AKW"/>
<dbReference type="PDBsum" id="5AL1"/>
<dbReference type="PDBsum" id="5AL2"/>
<dbReference type="PDBsum" id="5AL3"/>
<dbReference type="PDBsum" id="5AL4"/>
<dbReference type="PDBsum" id="5AL5"/>
<dbReference type="PDBsum" id="5BXO"/>
<dbReference type="PDBsum" id="5BXU"/>
<dbReference type="PDBsum" id="5C5P"/>
<dbReference type="PDBsum" id="5C5Q"/>
<dbReference type="PDBsum" id="5C5R"/>
<dbReference type="PDBsum" id="5DCZ"/>
<dbReference type="PDBsum" id="5FPF"/>
<dbReference type="PDBsum" id="5FPG"/>
<dbReference type="PDBsum" id="5JRT"/>
<dbReference type="PDBsum" id="5NOB"/>
<dbReference type="PDBsum" id="5NSP"/>
<dbReference type="PDBsum" id="5NUT"/>
<dbReference type="PDBsum" id="5OWS"/>
<dbReference type="PDBsum" id="5OWT"/>
<dbReference type="PDBsum" id="6TG4"/>
<dbReference type="PDBsum" id="6TKM"/>
<dbReference type="PDBsum" id="6TKN"/>
<dbReference type="PDBsum" id="6TKP"/>
<dbReference type="PDBsum" id="6TKQ"/>
<dbReference type="PDBsum" id="6TKR"/>
<dbReference type="PDBsum" id="6TKS"/>
<dbReference type="PDBsum" id="7A1S"/>
<dbReference type="PDBsum" id="7O6X"/>
<dbReference type="PDBsum" id="7POX"/>
<dbReference type="PDBsum" id="7R3Z"/>
<dbReference type="PDBsum" id="8ALY"/>
<dbReference type="EMDB" id="EMD-15520"/>
<dbReference type="SASBDB" id="Q9H2K2"/>
<dbReference type="SMR" id="Q9H2K2"/>
<dbReference type="BioGRID" id="123257">
    <property type="interactions" value="62"/>
</dbReference>
<dbReference type="CORUM" id="Q9H2K2"/>
<dbReference type="DIP" id="DIP-42098N"/>
<dbReference type="ELM" id="Q9H2K2"/>
<dbReference type="FunCoup" id="Q9H2K2">
    <property type="interactions" value="3788"/>
</dbReference>
<dbReference type="IntAct" id="Q9H2K2">
    <property type="interactions" value="64"/>
</dbReference>
<dbReference type="MINT" id="Q9H2K2"/>
<dbReference type="STRING" id="9606.ENSP00000360689"/>
<dbReference type="BindingDB" id="Q9H2K2"/>
<dbReference type="ChEMBL" id="CHEMBL6154"/>
<dbReference type="DrugBank" id="DB16063">
    <property type="generic name" value="2X-121"/>
</dbReference>
<dbReference type="DrugCentral" id="Q9H2K2"/>
<dbReference type="GuidetoPHARMACOLOGY" id="3109"/>
<dbReference type="GlyGen" id="Q9H2K2">
    <property type="glycosylation" value="2 sites, 1 O-linked glycan (1 site)"/>
</dbReference>
<dbReference type="iPTMnet" id="Q9H2K2"/>
<dbReference type="PhosphoSitePlus" id="Q9H2K2"/>
<dbReference type="BioMuta" id="TNKS2"/>
<dbReference type="DMDM" id="20140805"/>
<dbReference type="jPOST" id="Q9H2K2"/>
<dbReference type="MassIVE" id="Q9H2K2"/>
<dbReference type="PaxDb" id="9606-ENSP00000360689"/>
<dbReference type="PeptideAtlas" id="Q9H2K2"/>
<dbReference type="ProteomicsDB" id="80559"/>
<dbReference type="Pumba" id="Q9H2K2"/>
<dbReference type="ABCD" id="Q9H2K2">
    <property type="antibodies" value="2 sequenced antibodies"/>
</dbReference>
<dbReference type="Antibodypedia" id="30362">
    <property type="antibodies" value="215 antibodies from 29 providers"/>
</dbReference>
<dbReference type="DNASU" id="80351"/>
<dbReference type="Ensembl" id="ENST00000371627.5">
    <property type="protein sequence ID" value="ENSP00000360689.4"/>
    <property type="gene ID" value="ENSG00000107854.7"/>
</dbReference>
<dbReference type="GeneID" id="80351"/>
<dbReference type="KEGG" id="hsa:80351"/>
<dbReference type="MANE-Select" id="ENST00000371627.5">
    <property type="protein sequence ID" value="ENSP00000360689.4"/>
    <property type="RefSeq nucleotide sequence ID" value="NM_025235.4"/>
    <property type="RefSeq protein sequence ID" value="NP_079511.1"/>
</dbReference>
<dbReference type="UCSC" id="uc001khp.4">
    <property type="organism name" value="human"/>
</dbReference>
<dbReference type="AGR" id="HGNC:15677"/>
<dbReference type="CTD" id="80351"/>
<dbReference type="DisGeNET" id="80351"/>
<dbReference type="GeneCards" id="TNKS2"/>
<dbReference type="HGNC" id="HGNC:15677">
    <property type="gene designation" value="TNKS2"/>
</dbReference>
<dbReference type="HPA" id="ENSG00000107854">
    <property type="expression patterns" value="Low tissue specificity"/>
</dbReference>
<dbReference type="MIM" id="607128">
    <property type="type" value="gene"/>
</dbReference>
<dbReference type="neXtProt" id="NX_Q9H2K2"/>
<dbReference type="OpenTargets" id="ENSG00000107854"/>
<dbReference type="PharmGKB" id="PA38019"/>
<dbReference type="VEuPathDB" id="HostDB:ENSG00000107854"/>
<dbReference type="eggNOG" id="KOG4177">
    <property type="taxonomic scope" value="Eukaryota"/>
</dbReference>
<dbReference type="GeneTree" id="ENSGT00940000159911"/>
<dbReference type="HOGENOM" id="CLU_004303_0_0_1"/>
<dbReference type="InParanoid" id="Q9H2K2"/>
<dbReference type="OMA" id="CKLLLQX"/>
<dbReference type="OrthoDB" id="4772757at2759"/>
<dbReference type="PAN-GO" id="Q9H2K2">
    <property type="GO annotations" value="7 GO annotations based on evolutionary models"/>
</dbReference>
<dbReference type="PhylomeDB" id="Q9H2K2"/>
<dbReference type="TreeFam" id="TF326036"/>
<dbReference type="PathwayCommons" id="Q9H2K2"/>
<dbReference type="Reactome" id="R-HSA-201681">
    <property type="pathway name" value="TCF dependent signaling in response to WNT"/>
</dbReference>
<dbReference type="Reactome" id="R-HSA-4641257">
    <property type="pathway name" value="Degradation of AXIN"/>
</dbReference>
<dbReference type="Reactome" id="R-HSA-5545619">
    <property type="pathway name" value="XAV939 stabilizes AXIN"/>
</dbReference>
<dbReference type="Reactome" id="R-HSA-5689880">
    <property type="pathway name" value="Ub-specific processing proteases"/>
</dbReference>
<dbReference type="Reactome" id="R-HSA-8948751">
    <property type="pathway name" value="Regulation of PTEN stability and activity"/>
</dbReference>
<dbReference type="SignaLink" id="Q9H2K2"/>
<dbReference type="SIGNOR" id="Q9H2K2"/>
<dbReference type="BioGRID-ORCS" id="80351">
    <property type="hits" value="5 hits in 1159 CRISPR screens"/>
</dbReference>
<dbReference type="ChiTaRS" id="TNKS2">
    <property type="organism name" value="human"/>
</dbReference>
<dbReference type="EvolutionaryTrace" id="Q9H2K2"/>
<dbReference type="GeneWiki" id="TNKS2"/>
<dbReference type="GenomeRNAi" id="80351"/>
<dbReference type="Pharos" id="Q9H2K2">
    <property type="development level" value="Tchem"/>
</dbReference>
<dbReference type="PRO" id="PR:Q9H2K2"/>
<dbReference type="Proteomes" id="UP000005640">
    <property type="component" value="Chromosome 10"/>
</dbReference>
<dbReference type="RNAct" id="Q9H2K2">
    <property type="molecule type" value="protein"/>
</dbReference>
<dbReference type="Bgee" id="ENSG00000107854">
    <property type="expression patterns" value="Expressed in skeletal muscle tissue of rectus abdominis and 209 other cell types or tissues"/>
</dbReference>
<dbReference type="GO" id="GO:0000781">
    <property type="term" value="C:chromosome, telomeric region"/>
    <property type="evidence" value="ECO:0000304"/>
    <property type="project" value="BHF-UCL"/>
</dbReference>
<dbReference type="GO" id="GO:0005737">
    <property type="term" value="C:cytoplasm"/>
    <property type="evidence" value="ECO:0000314"/>
    <property type="project" value="BHF-UCL"/>
</dbReference>
<dbReference type="GO" id="GO:0005829">
    <property type="term" value="C:cytosol"/>
    <property type="evidence" value="ECO:0000304"/>
    <property type="project" value="Reactome"/>
</dbReference>
<dbReference type="GO" id="GO:0000139">
    <property type="term" value="C:Golgi membrane"/>
    <property type="evidence" value="ECO:0007669"/>
    <property type="project" value="UniProtKB-SubCell"/>
</dbReference>
<dbReference type="GO" id="GO:0005635">
    <property type="term" value="C:nuclear envelope"/>
    <property type="evidence" value="ECO:0000314"/>
    <property type="project" value="BHF-UCL"/>
</dbReference>
<dbReference type="GO" id="GO:0005634">
    <property type="term" value="C:nucleus"/>
    <property type="evidence" value="ECO:0000314"/>
    <property type="project" value="BHF-UCL"/>
</dbReference>
<dbReference type="GO" id="GO:0000242">
    <property type="term" value="C:pericentriolar material"/>
    <property type="evidence" value="ECO:0000314"/>
    <property type="project" value="BHF-UCL"/>
</dbReference>
<dbReference type="GO" id="GO:0048471">
    <property type="term" value="C:perinuclear region of cytoplasm"/>
    <property type="evidence" value="ECO:0000314"/>
    <property type="project" value="BHF-UCL"/>
</dbReference>
<dbReference type="GO" id="GO:0019899">
    <property type="term" value="F:enzyme binding"/>
    <property type="evidence" value="ECO:0000353"/>
    <property type="project" value="UniProtKB"/>
</dbReference>
<dbReference type="GO" id="GO:0046872">
    <property type="term" value="F:metal ion binding"/>
    <property type="evidence" value="ECO:0007669"/>
    <property type="project" value="UniProtKB-KW"/>
</dbReference>
<dbReference type="GO" id="GO:0003950">
    <property type="term" value="F:NAD+ poly-ADP-ribosyltransferase activity"/>
    <property type="evidence" value="ECO:0000314"/>
    <property type="project" value="UniProtKB"/>
</dbReference>
<dbReference type="GO" id="GO:1990404">
    <property type="term" value="F:NAD+-protein mono-ADP-ribosyltransferase activity"/>
    <property type="evidence" value="ECO:0000314"/>
    <property type="project" value="UniProtKB"/>
</dbReference>
<dbReference type="GO" id="GO:0140806">
    <property type="term" value="F:NAD+-protein-aspartate ADP-ribosyltransferase activity"/>
    <property type="evidence" value="ECO:0007669"/>
    <property type="project" value="RHEA"/>
</dbReference>
<dbReference type="GO" id="GO:0140807">
    <property type="term" value="F:NAD+-protein-glutamate ADP-ribosyltransferase activity"/>
    <property type="evidence" value="ECO:0007669"/>
    <property type="project" value="RHEA"/>
</dbReference>
<dbReference type="GO" id="GO:0016779">
    <property type="term" value="F:nucleotidyltransferase activity"/>
    <property type="evidence" value="ECO:0007669"/>
    <property type="project" value="UniProtKB-KW"/>
</dbReference>
<dbReference type="GO" id="GO:1904357">
    <property type="term" value="P:negative regulation of telomere maintenance via telomere lengthening"/>
    <property type="evidence" value="ECO:0000315"/>
    <property type="project" value="BHF-UCL"/>
</dbReference>
<dbReference type="GO" id="GO:0090263">
    <property type="term" value="P:positive regulation of canonical Wnt signaling pathway"/>
    <property type="evidence" value="ECO:0000315"/>
    <property type="project" value="UniProtKB"/>
</dbReference>
<dbReference type="GO" id="GO:1904355">
    <property type="term" value="P:positive regulation of telomere capping"/>
    <property type="evidence" value="ECO:0000315"/>
    <property type="project" value="BHF-UCL"/>
</dbReference>
<dbReference type="GO" id="GO:0032212">
    <property type="term" value="P:positive regulation of telomere maintenance via telomerase"/>
    <property type="evidence" value="ECO:0000304"/>
    <property type="project" value="BHF-UCL"/>
</dbReference>
<dbReference type="GO" id="GO:0070213">
    <property type="term" value="P:protein auto-ADP-ribosylation"/>
    <property type="evidence" value="ECO:0000314"/>
    <property type="project" value="UniProtKB"/>
</dbReference>
<dbReference type="GO" id="GO:0070198">
    <property type="term" value="P:protein localization to chromosome, telomeric region"/>
    <property type="evidence" value="ECO:0000315"/>
    <property type="project" value="BHF-UCL"/>
</dbReference>
<dbReference type="GO" id="GO:0070212">
    <property type="term" value="P:protein poly-ADP-ribosylation"/>
    <property type="evidence" value="ECO:0000314"/>
    <property type="project" value="UniProtKB"/>
</dbReference>
<dbReference type="GO" id="GO:0000209">
    <property type="term" value="P:protein polyubiquitination"/>
    <property type="evidence" value="ECO:0000314"/>
    <property type="project" value="UniProtKB"/>
</dbReference>
<dbReference type="GO" id="GO:0016055">
    <property type="term" value="P:Wnt signaling pathway"/>
    <property type="evidence" value="ECO:0007669"/>
    <property type="project" value="UniProtKB-KW"/>
</dbReference>
<dbReference type="CDD" id="cd09524">
    <property type="entry name" value="SAM_tankyrase1_2"/>
    <property type="match status" value="1"/>
</dbReference>
<dbReference type="CDD" id="cd01438">
    <property type="entry name" value="tankyrase_like"/>
    <property type="match status" value="1"/>
</dbReference>
<dbReference type="FunFam" id="1.10.150.50:FF:000012">
    <property type="entry name" value="Poly [ADP-ribose] polymerase"/>
    <property type="match status" value="1"/>
</dbReference>
<dbReference type="FunFam" id="1.25.40.20:FF:000009">
    <property type="entry name" value="Poly [ADP-ribose] polymerase"/>
    <property type="match status" value="1"/>
</dbReference>
<dbReference type="FunFam" id="1.25.40.20:FF:000010">
    <property type="entry name" value="Poly [ADP-ribose] polymerase"/>
    <property type="match status" value="1"/>
</dbReference>
<dbReference type="FunFam" id="1.25.40.20:FF:000011">
    <property type="entry name" value="Poly [ADP-ribose] polymerase"/>
    <property type="match status" value="1"/>
</dbReference>
<dbReference type="FunFam" id="1.25.40.20:FF:000021">
    <property type="entry name" value="Poly [ADP-ribose] polymerase"/>
    <property type="match status" value="1"/>
</dbReference>
<dbReference type="FunFam" id="1.25.40.20:FF:000024">
    <property type="entry name" value="Poly [ADP-ribose] polymerase"/>
    <property type="match status" value="1"/>
</dbReference>
<dbReference type="FunFam" id="3.90.228.10:FF:000001">
    <property type="entry name" value="Poly [ADP-ribose] polymerase tankyrase-2"/>
    <property type="match status" value="1"/>
</dbReference>
<dbReference type="Gene3D" id="3.90.228.10">
    <property type="match status" value="1"/>
</dbReference>
<dbReference type="Gene3D" id="6.20.320.10">
    <property type="match status" value="1"/>
</dbReference>
<dbReference type="Gene3D" id="1.25.40.20">
    <property type="entry name" value="Ankyrin repeat-containing domain"/>
    <property type="match status" value="5"/>
</dbReference>
<dbReference type="Gene3D" id="1.10.150.50">
    <property type="entry name" value="Transcription Factor, Ets-1"/>
    <property type="match status" value="1"/>
</dbReference>
<dbReference type="InterPro" id="IPR002110">
    <property type="entry name" value="Ankyrin_rpt"/>
</dbReference>
<dbReference type="InterPro" id="IPR036770">
    <property type="entry name" value="Ankyrin_rpt-contain_sf"/>
</dbReference>
<dbReference type="InterPro" id="IPR012317">
    <property type="entry name" value="Poly(ADP-ribose)pol_cat_dom"/>
</dbReference>
<dbReference type="InterPro" id="IPR001660">
    <property type="entry name" value="SAM"/>
</dbReference>
<dbReference type="InterPro" id="IPR013761">
    <property type="entry name" value="SAM/pointed_sf"/>
</dbReference>
<dbReference type="PANTHER" id="PTHR24171">
    <property type="entry name" value="ANKYRIN REPEAT DOMAIN-CONTAINING PROTEIN 39-RELATED"/>
    <property type="match status" value="1"/>
</dbReference>
<dbReference type="PANTHER" id="PTHR24171:SF8">
    <property type="entry name" value="BRCA1-ASSOCIATED RING DOMAIN PROTEIN 1"/>
    <property type="match status" value="1"/>
</dbReference>
<dbReference type="Pfam" id="PF00023">
    <property type="entry name" value="Ank"/>
    <property type="match status" value="3"/>
</dbReference>
<dbReference type="Pfam" id="PF12796">
    <property type="entry name" value="Ank_2"/>
    <property type="match status" value="5"/>
</dbReference>
<dbReference type="Pfam" id="PF13606">
    <property type="entry name" value="Ank_3"/>
    <property type="match status" value="1"/>
</dbReference>
<dbReference type="Pfam" id="PF00644">
    <property type="entry name" value="PARP"/>
    <property type="match status" value="1"/>
</dbReference>
<dbReference type="Pfam" id="PF07647">
    <property type="entry name" value="SAM_2"/>
    <property type="match status" value="1"/>
</dbReference>
<dbReference type="PRINTS" id="PR01415">
    <property type="entry name" value="ANKYRIN"/>
</dbReference>
<dbReference type="SMART" id="SM00248">
    <property type="entry name" value="ANK"/>
    <property type="match status" value="15"/>
</dbReference>
<dbReference type="SMART" id="SM00454">
    <property type="entry name" value="SAM"/>
    <property type="match status" value="1"/>
</dbReference>
<dbReference type="SUPFAM" id="SSF56399">
    <property type="entry name" value="ADP-ribosylation"/>
    <property type="match status" value="1"/>
</dbReference>
<dbReference type="SUPFAM" id="SSF48403">
    <property type="entry name" value="Ankyrin repeat"/>
    <property type="match status" value="3"/>
</dbReference>
<dbReference type="SUPFAM" id="SSF47769">
    <property type="entry name" value="SAM/Pointed domain"/>
    <property type="match status" value="1"/>
</dbReference>
<dbReference type="PROSITE" id="PS50297">
    <property type="entry name" value="ANK_REP_REGION"/>
    <property type="match status" value="1"/>
</dbReference>
<dbReference type="PROSITE" id="PS50088">
    <property type="entry name" value="ANK_REPEAT"/>
    <property type="match status" value="15"/>
</dbReference>
<dbReference type="PROSITE" id="PS51059">
    <property type="entry name" value="PARP_CATALYTIC"/>
    <property type="match status" value="1"/>
</dbReference>
<dbReference type="PROSITE" id="PS50105">
    <property type="entry name" value="SAM_DOMAIN"/>
    <property type="match status" value="1"/>
</dbReference>
<evidence type="ECO:0000250" key="1">
    <source>
        <dbReference type="UniProtKB" id="O95271"/>
    </source>
</evidence>
<evidence type="ECO:0000255" key="2">
    <source>
        <dbReference type="PROSITE-ProRule" id="PRU00184"/>
    </source>
</evidence>
<evidence type="ECO:0000255" key="3">
    <source>
        <dbReference type="PROSITE-ProRule" id="PRU00397"/>
    </source>
</evidence>
<evidence type="ECO:0000256" key="4">
    <source>
        <dbReference type="SAM" id="MobiDB-lite"/>
    </source>
</evidence>
<evidence type="ECO:0000269" key="5">
    <source>
    </source>
</evidence>
<evidence type="ECO:0000269" key="6">
    <source>
    </source>
</evidence>
<evidence type="ECO:0000269" key="7">
    <source>
    </source>
</evidence>
<evidence type="ECO:0000269" key="8">
    <source>
    </source>
</evidence>
<evidence type="ECO:0000269" key="9">
    <source>
    </source>
</evidence>
<evidence type="ECO:0000269" key="10">
    <source>
    </source>
</evidence>
<evidence type="ECO:0000269" key="11">
    <source>
    </source>
</evidence>
<evidence type="ECO:0000269" key="12">
    <source>
    </source>
</evidence>
<evidence type="ECO:0000269" key="13">
    <source>
    </source>
</evidence>
<evidence type="ECO:0000269" key="14">
    <source>
    </source>
</evidence>
<evidence type="ECO:0000269" key="15">
    <source>
    </source>
</evidence>
<evidence type="ECO:0000303" key="16">
    <source>
    </source>
</evidence>
<evidence type="ECO:0000305" key="17"/>
<evidence type="ECO:0000312" key="18">
    <source>
        <dbReference type="HGNC" id="HGNC:15677"/>
    </source>
</evidence>
<evidence type="ECO:0007829" key="19">
    <source>
        <dbReference type="PDB" id="4PNL"/>
    </source>
</evidence>
<evidence type="ECO:0007829" key="20">
    <source>
        <dbReference type="PDB" id="4TJW"/>
    </source>
</evidence>
<evidence type="ECO:0007829" key="21">
    <source>
        <dbReference type="PDB" id="5BXO"/>
    </source>
</evidence>
<evidence type="ECO:0007829" key="22">
    <source>
        <dbReference type="PDB" id="5C5R"/>
    </source>
</evidence>
<evidence type="ECO:0007829" key="23">
    <source>
        <dbReference type="PDB" id="5JRT"/>
    </source>
</evidence>
<evidence type="ECO:0007829" key="24">
    <source>
        <dbReference type="PDB" id="7A1S"/>
    </source>
</evidence>
<sequence length="1166" mass="126918">MSGRRCAGGGAACASAAAEAVEPAARELFEACRNGDVERVKRLVTPEKVNSRDTAGRKSTPLHFAAGFGRKDVVEYLLQNGANVQARDDGGLIPLHNACSFGHAEVVNLLLRHGADPNARDNWNYTPLHEAAIKGKIDVCIVLLQHGAEPTIRNTDGRTALDLADPSAKAVLTGEYKKDELLESARSGNEEKMMALLTPLNVNCHASDGRKSTPLHLAAGYNRVKIVQLLLQHGADVHAKDKGDLVPLHNACSYGHYEVTELLVKHGACVNAMDLWQFTPLHEAASKNRVEVCSLLLSYGADPTLLNCHNKSAIDLAPTPQLKERLAYEFKGHSLLQAAREADVTRIKKHLSLEMVNFKHPQTHETALHCAAASPYPKRKQICELLLRKGANINEKTKEFLTPLHVASEKAHNDVVEVVVKHEAKVNALDNLGQTSLHRAAYCGHLQTCRLLLSYGCDPNIISLQGFTALQMGNENVQQLLQEGISLGNSEADRQLLEAAKAGDVETVKKLCTVQSVNCRDIEGRQSTPLHFAAGYNRVSVVEYLLQHGADVHAKDKGGLVPLHNACSYGHYEVAELLVKHGAVVNVADLWKFTPLHEAAAKGKYEICKLLLQHGADPTKKNRDGNTPLDLVKDGDTDIQDLLRGDAALLDAAKKGCLARVKKLSSPDNVNCRDTQGRHSTPLHLAAGYNNLEVAEYLLQHGADVNAQDKGGLIPLHNAASYGHVDVAALLIKYNACVNATDKWAFTPLHEAAQKGRTQLCALLLAHGADPTLKNQEGQTPLDLVSADDVSALLTAAMPPSALPSCYKPQVLNGVRSPGATADALSSGPSSPSSLSAASSLDNLSGSFSELSSVVSSSGTEGASSLEKKEVPGVDFSITQFVRNLGLEHLMDIFEREQITLDVLVEMGHKELKEIGINAYGHRHKLIKGVERLISGQQGLNPYLTLNTSGSGTILIDLSPDDKEFQSVEEEMQSTVREHRDGGHAGGIFNRYNILKIQKVCNKKLWERYTHRRKEVSEENHNHANERMLFHGSPFVNAIIHKGFDERHAYIGGMFGAGIYFAENSSKSNQYVYGIGGGTGCPVHKDRSCYICHRQLLFCRVTLGKSFLQFSAMKMAHSPPGHHSVTGRPSVNGLALAEYVIYRGEQAYPEYLITYQIMRPEGMVDG</sequence>